<protein>
    <recommendedName>
        <fullName>Genome polyprotein</fullName>
    </recommendedName>
    <component>
        <recommendedName>
            <fullName>Peptide 2k</fullName>
        </recommendedName>
    </component>
    <component>
        <recommendedName>
            <fullName>Capsid protein C</fullName>
        </recommendedName>
        <alternativeName>
            <fullName>Core protein</fullName>
        </alternativeName>
    </component>
    <component>
        <recommendedName>
            <fullName>Protein prM</fullName>
        </recommendedName>
    </component>
    <component>
        <recommendedName>
            <fullName>Peptide pr</fullName>
        </recommendedName>
    </component>
    <component>
        <recommendedName>
            <fullName>Small envelope protein M</fullName>
        </recommendedName>
        <alternativeName>
            <fullName>Matrix protein</fullName>
        </alternativeName>
    </component>
    <component>
        <recommendedName>
            <fullName>Envelope protein E</fullName>
        </recommendedName>
    </component>
    <component>
        <recommendedName>
            <fullName>Non-structural protein 1</fullName>
            <shortName>NS1</shortName>
        </recommendedName>
    </component>
    <component>
        <recommendedName>
            <fullName>Non-structural protein 2A</fullName>
            <shortName>NS2A</shortName>
        </recommendedName>
    </component>
    <component>
        <recommendedName>
            <fullName>Serine protease subunit NS2B</fullName>
        </recommendedName>
        <alternativeName>
            <fullName>Flavivirin protease NS2B regulatory subunit</fullName>
        </alternativeName>
        <alternativeName>
            <fullName>Non-structural protein 2B</fullName>
        </alternativeName>
    </component>
    <component>
        <recommendedName>
            <fullName>Serine protease NS3</fullName>
            <ecNumber>3.4.21.91</ecNumber>
            <ecNumber>3.6.1.15</ecNumber>
            <ecNumber>3.6.4.13</ecNumber>
        </recommendedName>
        <alternativeName>
            <fullName>Flavivirin protease NS3 catalytic subunit</fullName>
        </alternativeName>
        <alternativeName>
            <fullName>Non-structural protein 3</fullName>
        </alternativeName>
    </component>
    <component>
        <recommendedName>
            <fullName>Non-structural protein 4A</fullName>
            <shortName>NS4A</shortName>
        </recommendedName>
    </component>
    <component>
        <recommendedName>
            <fullName>Non-structural protein 4B</fullName>
            <shortName>NS4B</shortName>
        </recommendedName>
    </component>
    <component>
        <recommendedName>
            <fullName>RNA-directed RNA polymerase NS5</fullName>
            <ecNumber evidence="16">2.1.1.56</ecNumber>
            <ecNumber evidence="16">2.1.1.57</ecNumber>
            <ecNumber evidence="11">2.7.7.48</ecNumber>
        </recommendedName>
        <alternativeName>
            <fullName>Non-structural protein 5</fullName>
        </alternativeName>
    </component>
</protein>
<organism>
    <name type="scientific">Tick-borne encephalitis virus European subtype (strain Neudoerfl)</name>
    <name type="common">NEUV</name>
    <name type="synonym">Neudoerfl virus</name>
    <dbReference type="NCBI Taxonomy" id="11088"/>
    <lineage>
        <taxon>Viruses</taxon>
        <taxon>Riboviria</taxon>
        <taxon>Orthornavirae</taxon>
        <taxon>Kitrinoviricota</taxon>
        <taxon>Flasuviricetes</taxon>
        <taxon>Amarillovirales</taxon>
        <taxon>Flaviviridae</taxon>
        <taxon>Orthoflavivirus</taxon>
        <taxon>Orthoflavivirus encephalitidis</taxon>
        <taxon>Tick-borne encephalitis virus</taxon>
    </lineage>
</organism>
<accession>P14336</accession>
<accession>Q88493</accession>
<proteinExistence type="evidence at protein level"/>
<organismHost>
    <name type="scientific">Homo sapiens</name>
    <name type="common">Human</name>
    <dbReference type="NCBI Taxonomy" id="9606"/>
</organismHost>
<organismHost>
    <name type="scientific">Ixodes persulcatus</name>
    <name type="common">Taiga tick</name>
    <dbReference type="NCBI Taxonomy" id="34615"/>
</organismHost>
<organismHost>
    <name type="scientific">Ixodes ricinus</name>
    <name type="common">Common tick</name>
    <name type="synonym">Acarus ricinus</name>
    <dbReference type="NCBI Taxonomy" id="34613"/>
</organismHost>
<comment type="function">
    <molecule>Capsid protein C</molecule>
    <text evidence="4">Plays a role in virus budding by binding to the cell membrane and gathering the viral RNA into a nucleocapsid that forms the core of a mature virus particle. During virus entry, may induce genome penetration into the host cytoplasm after hemifusion induced by the surface proteins. Can migrate to the cell nucleus where it modulates host functions.</text>
</comment>
<comment type="function">
    <molecule>Capsid protein C</molecule>
    <text evidence="1">Inhibits RNA silencing by interfering with host Dicer.</text>
</comment>
<comment type="function">
    <molecule>Peptide pr</molecule>
    <text evidence="4">Prevents premature fusion activity of envelope proteins in trans-Golgi by binding to envelope protein E at pH6.0. After virion release in extracellular space, gets dissociated from E dimers.</text>
</comment>
<comment type="function">
    <molecule>Protein prM</molecule>
    <text evidence="4">Acts as a chaperone for envelope protein E during intracellular virion assembly by masking and inactivating envelope protein E fusion peptide. prM is the only viral peptide matured by host furin in the trans-Golgi network probably to avoid catastrophic activation of the viral fusion activity in acidic Golgi compartment prior to virion release. prM-E cleavage is inefficient, and many virions are only partially matured. These uncleaved prM would play a role in immune evasion.</text>
</comment>
<comment type="function">
    <molecule>Small envelope protein M</molecule>
    <text evidence="4">May play a role in virus budding. Exerts cytotoxic effects by activating a mitochondrial apoptotic pathway through M ectodomain. May display a viroporin activity.</text>
</comment>
<comment type="function">
    <molecule>Envelope protein E</molecule>
    <text evidence="4">Binds to host cell surface receptor and mediates fusion between viral and cellular membranes. Envelope protein is synthesized in the endoplasmic reticulum in the form of heterodimer with protein prM. They play a role in virion budding in the ER, and the newly formed immature particle is covered with 60 spikes composed of heterodimer between precursor prM and envelope protein E. The virion is transported to the Golgi apparatus where the low pH causes dissociation of PrM-E heterodimers and formation of E homodimers. prM-E cleavage is inefficient, and many virions are only partially matured. These uncleaved prM would play a role in immune evasion.</text>
</comment>
<comment type="function">
    <molecule>Non-structural protein 1</molecule>
    <text evidence="8">Involved in immune evasion, pathogenesis and viral replication. Once cleaved off the polyprotein, is targeted to three destinations: the viral replication cycle, the plasma membrane and the extracellular compartment. Essential for viral replication. Required for formation of the replication complex and recruitment of other non-structural proteins to the ER-derived membrane structures. Excreted as a hexameric lipoparticle that plays a role against host immune response. Antagonizing the complement function. Binds to the host macrophages and dendritic cells. Inhibits signal transduction originating from Toll-like receptor 3 (TLR3).</text>
</comment>
<comment type="function">
    <molecule>Non-structural protein 2A</molecule>
    <text evidence="4">Component of the viral RNA replication complex that functions in virion assembly and antagonizes the host immune response.</text>
</comment>
<comment type="function">
    <molecule>Serine protease subunit NS2B</molecule>
    <text evidence="4 14">Required cofactor for the serine protease function of NS3 (By similarity). May have membrane-destabilizing activity and form viroporins (By similarity).</text>
</comment>
<comment type="function">
    <molecule>Serine protease NS3</molecule>
    <text evidence="15">Displays three enzymatic activities: serine protease, NTPase and RNA helicase. NS3 serine protease, in association with NS2B, performs its autocleavage and cleaves the polyprotein at dibasic sites in the cytoplasm: C-prM, NS2A-NS2B, NS2B-NS3, NS3-NS4A, NS4A-2K and NS4B-NS5. NS3 RNA helicase binds RNA and unwinds dsRNA in the 3' to 5' direction.</text>
</comment>
<comment type="function">
    <molecule>Non-structural protein 4A</molecule>
    <text evidence="8">Regulates the ATPase activity of the NS3 helicase activity. NS4A allows NS3 helicase to conserve energy during unwinding.</text>
</comment>
<comment type="function">
    <molecule>Peptide 2k</molecule>
    <text evidence="4">Functions as a signal peptide for NS4B and is required for the interferon antagonism activity of the latter.</text>
</comment>
<comment type="function">
    <molecule>Non-structural protein 4B</molecule>
    <text evidence="8">Induces the formation of ER-derived membrane vesicles where the viral replication takes place. Inhibits interferon (IFN)-induced host STAT1 phosphorylation and nuclear translocation, thereby preventing the establishment of cellular antiviral state by blocking the IFN-alpha/beta pathway. Inhibits STAT2 translocation in the nucleus after IFN-alpha treatment.</text>
</comment>
<comment type="function">
    <molecule>RNA-directed RNA polymerase NS5</molecule>
    <text evidence="4">Replicates the viral (+) and (-) genome, and performs the capping of genomes in the cytoplasm. NS5 methylates viral RNA cap at guanine N-7 and ribose 2'-O positions. Besides its role in RNA genome replication, also prevents the establishment of cellular antiviral state by blocking the interferon-alpha/beta (IFN-alpha/beta) signaling pathway. Inhibits host TYK2 and STAT2 phosphorylation, thereby preventing activation of JAK-STAT signaling pathway.</text>
</comment>
<comment type="catalytic activity">
    <reaction>
        <text>Selective hydrolysis of -Xaa-Xaa-|-Yaa- bonds in which each of the Xaa can be either Arg or Lys and Yaa can be either Ser or Ala.</text>
        <dbReference type="EC" id="3.4.21.91"/>
    </reaction>
</comment>
<comment type="catalytic activity">
    <reaction evidence="11">
        <text>RNA(n) + a ribonucleoside 5'-triphosphate = RNA(n+1) + diphosphate</text>
        <dbReference type="Rhea" id="RHEA:21248"/>
        <dbReference type="Rhea" id="RHEA-COMP:14527"/>
        <dbReference type="Rhea" id="RHEA-COMP:17342"/>
        <dbReference type="ChEBI" id="CHEBI:33019"/>
        <dbReference type="ChEBI" id="CHEBI:61557"/>
        <dbReference type="ChEBI" id="CHEBI:140395"/>
        <dbReference type="EC" id="2.7.7.48"/>
    </reaction>
</comment>
<comment type="catalytic activity">
    <reaction>
        <text>a ribonucleoside 5'-triphosphate + H2O = a ribonucleoside 5'-diphosphate + phosphate + H(+)</text>
        <dbReference type="Rhea" id="RHEA:23680"/>
        <dbReference type="ChEBI" id="CHEBI:15377"/>
        <dbReference type="ChEBI" id="CHEBI:15378"/>
        <dbReference type="ChEBI" id="CHEBI:43474"/>
        <dbReference type="ChEBI" id="CHEBI:57930"/>
        <dbReference type="ChEBI" id="CHEBI:61557"/>
        <dbReference type="EC" id="3.6.1.15"/>
    </reaction>
</comment>
<comment type="catalytic activity">
    <reaction>
        <text>ATP + H2O = ADP + phosphate + H(+)</text>
        <dbReference type="Rhea" id="RHEA:13065"/>
        <dbReference type="ChEBI" id="CHEBI:15377"/>
        <dbReference type="ChEBI" id="CHEBI:15378"/>
        <dbReference type="ChEBI" id="CHEBI:30616"/>
        <dbReference type="ChEBI" id="CHEBI:43474"/>
        <dbReference type="ChEBI" id="CHEBI:456216"/>
        <dbReference type="EC" id="3.6.4.13"/>
    </reaction>
</comment>
<comment type="catalytic activity">
    <reaction evidence="16">
        <text>a 5'-end (5'-triphosphoguanosine)-ribonucleoside in mRNA + S-adenosyl-L-methionine = a 5'-end (N(7)-methyl 5'-triphosphoguanosine)-ribonucleoside in mRNA + S-adenosyl-L-homocysteine</text>
        <dbReference type="Rhea" id="RHEA:67008"/>
        <dbReference type="Rhea" id="RHEA-COMP:17166"/>
        <dbReference type="Rhea" id="RHEA-COMP:17167"/>
        <dbReference type="ChEBI" id="CHEBI:57856"/>
        <dbReference type="ChEBI" id="CHEBI:59789"/>
        <dbReference type="ChEBI" id="CHEBI:156461"/>
        <dbReference type="ChEBI" id="CHEBI:167617"/>
        <dbReference type="EC" id="2.1.1.56"/>
    </reaction>
</comment>
<comment type="catalytic activity">
    <reaction evidence="16">
        <text>a 5'-end (N(7)-methyl 5'-triphosphoguanosine)-ribonucleoside in mRNA + S-adenosyl-L-methionine = a 5'-end (N(7)-methyl 5'-triphosphoguanosine)-(2'-O-methyl-ribonucleoside) in mRNA + S-adenosyl-L-homocysteine + H(+)</text>
        <dbReference type="Rhea" id="RHEA:67020"/>
        <dbReference type="Rhea" id="RHEA-COMP:17167"/>
        <dbReference type="Rhea" id="RHEA-COMP:17168"/>
        <dbReference type="ChEBI" id="CHEBI:15378"/>
        <dbReference type="ChEBI" id="CHEBI:57856"/>
        <dbReference type="ChEBI" id="CHEBI:59789"/>
        <dbReference type="ChEBI" id="CHEBI:156461"/>
        <dbReference type="ChEBI" id="CHEBI:167609"/>
        <dbReference type="EC" id="2.1.1.57"/>
    </reaction>
</comment>
<comment type="subunit">
    <molecule>Capsid protein C</molecule>
    <text evidence="4 19">Homodimer (PubMed:15254179). Interacts (via N-terminus) with host EXOC1 (via C-terminus); this interaction results in EXOC1 degradation through the proteasome degradation pathway (By similarity).</text>
</comment>
<comment type="subunit">
    <molecule>Protein prM</molecule>
    <text evidence="4">Forms heterodimers with envelope protein E in the endoplasmic reticulum and Golgi (By similarity).</text>
</comment>
<comment type="subunit">
    <molecule>Envelope protein E</molecule>
    <text evidence="4">Homodimer; in the endoplasmic reticulum and Golgi (By similarity). Interacts with protein prM (By similarity). Interacts with non-structural protein 1 (By similarity).</text>
</comment>
<comment type="subunit">
    <molecule>Non-structural protein 1</molecule>
    <text evidence="4">Homodimer; Homohexamer when secreted. Interacts with envelope protein E (By similarity).</text>
</comment>
<comment type="subunit">
    <molecule>Non-structural protein 2A</molecule>
    <text evidence="1">Interacts (via N-terminus) with serine protease NS3.</text>
</comment>
<comment type="subunit">
    <molecule>Serine protease subunit NS2B</molecule>
    <text evidence="4">Forms a heterodimer with serine protease NS3 (By similarity). May form homooligomers (By similarity).</text>
</comment>
<comment type="subunit">
    <molecule>Serine protease NS3</molecule>
    <text evidence="4">Forms a heterodimer with NS2B (By similarity). Interacts with NS4B (By similarity). Interacts with unphosphorylated RNA-directed RNA polymerase NS5; this interaction stimulates RNA-directed RNA polymerase NS5 guanylyltransferase activity (By similarity).</text>
</comment>
<comment type="subunit">
    <molecule>Non-structural protein 4B</molecule>
    <text evidence="4">Interacts with serine protease NS3 (By similarity). Interacts with NS1 (By similarity).</text>
</comment>
<comment type="subunit">
    <molecule>RNA-directed RNA polymerase NS5</molecule>
    <text evidence="5">Homodimer. Interacts with host STAT2; this interaction inhibits the phosphorylation of the latter, and, when all viral proteins are present (polyprotein), targets STAT2 for degradation. Interacts with serine protease NS3. Interacts with host SCRIB; this interaction targets NS5 to the cell membrane periphery and nucleus, thereby allowing efficient host nuclear STAT1 inhibition.</text>
</comment>
<comment type="subcellular location">
    <molecule>Capsid protein C</molecule>
    <subcellularLocation>
        <location evidence="4">Virion</location>
    </subcellularLocation>
    <subcellularLocation>
        <location evidence="4">Host nucleus</location>
    </subcellularLocation>
    <subcellularLocation>
        <location evidence="4">Host cytoplasm</location>
        <location evidence="4">Host perinuclear region</location>
    </subcellularLocation>
    <subcellularLocation>
        <location evidence="4">Host cytoplasm</location>
    </subcellularLocation>
</comment>
<comment type="subcellular location">
    <molecule>Peptide pr</molecule>
    <subcellularLocation>
        <location evidence="4">Secreted</location>
    </subcellularLocation>
</comment>
<comment type="subcellular location">
    <molecule>Small envelope protein M</molecule>
    <subcellularLocation>
        <location evidence="1">Virion membrane</location>
        <topology evidence="1">Multi-pass membrane protein</topology>
    </subcellularLocation>
    <subcellularLocation>
        <location evidence="1">Host endoplasmic reticulum membrane</location>
        <topology evidence="9">Multi-pass membrane protein</topology>
    </subcellularLocation>
    <text evidence="1">ER membrane retention is mediated by the transmembrane domains.</text>
</comment>
<comment type="subcellular location">
    <molecule>Envelope protein E</molecule>
    <subcellularLocation>
        <location evidence="23">Virion membrane</location>
        <topology evidence="1">Multi-pass membrane protein</topology>
    </subcellularLocation>
    <subcellularLocation>
        <location evidence="1">Host endoplasmic reticulum membrane</location>
        <topology evidence="9">Multi-pass membrane protein</topology>
    </subcellularLocation>
    <text evidence="1">ER membrane retention is mediated by the transmembrane domains.</text>
</comment>
<comment type="subcellular location">
    <molecule>Non-structural protein 1</molecule>
    <subcellularLocation>
        <location evidence="4">Secreted</location>
    </subcellularLocation>
    <subcellularLocation>
        <location>Host endoplasmic reticulum membrane</location>
        <topology>Peripheral membrane protein</topology>
        <orientation evidence="4">Lumenal side</orientation>
    </subcellularLocation>
    <text evidence="8">Located in RE-derived vesicles hosting the replication complex.</text>
</comment>
<comment type="subcellular location">
    <molecule>Non-structural protein 2A</molecule>
    <subcellularLocation>
        <location evidence="3">Host endoplasmic reticulum membrane</location>
        <topology evidence="4">Multi-pass membrane protein</topology>
    </subcellularLocation>
</comment>
<comment type="subcellular location">
    <molecule>Serine protease subunit NS2B</molecule>
    <subcellularLocation>
        <location>Host endoplasmic reticulum membrane</location>
        <topology evidence="4">Multi-pass membrane protein</topology>
    </subcellularLocation>
</comment>
<comment type="subcellular location">
    <molecule>Serine protease NS3</molecule>
    <subcellularLocation>
        <location evidence="15">Host endoplasmic reticulum membrane</location>
        <topology evidence="15">Peripheral membrane protein</topology>
        <orientation evidence="15">Cytoplasmic side</orientation>
    </subcellularLocation>
    <text evidence="15">Remains non-covalently associated to serine protease subunit NS2B.</text>
</comment>
<comment type="subcellular location">
    <molecule>Non-structural protein 4A</molecule>
    <subcellularLocation>
        <location evidence="3">Host endoplasmic reticulum membrane</location>
        <topology evidence="4">Multi-pass membrane protein</topology>
    </subcellularLocation>
    <text evidence="4">Located in RE-associated vesicles hosting the replication complex.</text>
</comment>
<comment type="subcellular location">
    <molecule>Non-structural protein 4B</molecule>
    <subcellularLocation>
        <location evidence="4">Host endoplasmic reticulum membrane</location>
        <topology evidence="4">Multi-pass membrane protein</topology>
    </subcellularLocation>
    <text evidence="8">Located in RE-derived vesicles hosting the replication complex.</text>
</comment>
<comment type="subcellular location">
    <molecule>RNA-directed RNA polymerase NS5</molecule>
    <subcellularLocation>
        <location>Host endoplasmic reticulum membrane</location>
        <topology>Peripheral membrane protein</topology>
        <orientation>Cytoplasmic side</orientation>
    </subcellularLocation>
    <subcellularLocation>
        <location evidence="2">Host nucleus</location>
    </subcellularLocation>
    <text evidence="4">Located in RE-associated vesicles hosting the replication complex. NS5 protein is mainly localized in the nucleus rather than in ER vesicles.</text>
</comment>
<comment type="domain">
    <text evidence="4">The transmembrane domains of the small envelope protein M and envelope protein E contain an endoplasmic reticulum retention signal.</text>
</comment>
<comment type="PTM">
    <molecule>Genome polyprotein</molecule>
    <text evidence="4">Specific enzymatic cleavages in vivo yield mature proteins. Cleavages in the lumen of endoplasmic reticulum are performed by host signal peptidase, whereas cleavages in the cytoplasmic side are performed by serine protease NS3. Signal cleavage at the 2K-4B site requires a prior NS3 protease-mediated cleavage at the 4A-2K site.</text>
</comment>
<comment type="PTM">
    <molecule>Protein prM</molecule>
    <text evidence="4">Cleaved in post-Golgi vesicles by a host furin, releasing the mature small envelope protein M, and peptide pr. This cleavage is incomplete as up to 30% of viral particles still carry uncleaved prM.</text>
</comment>
<comment type="PTM">
    <molecule>Envelope protein E</molecule>
    <text evidence="20 22">N-glycosylated.</text>
</comment>
<comment type="PTM">
    <molecule>Non-structural protein 1</molecule>
    <text evidence="4">N-glycosylated. The excreted form is glycosylated and this is required for efficient secretion of the protein from infected cells.</text>
</comment>
<comment type="PTM">
    <molecule>Serine protease NS3</molecule>
    <text evidence="6">Acetylated by host KAT5. Acetylation modulates NS3 RNA-binding and unwinding activities and plays an important positive role for viral replication.</text>
</comment>
<comment type="PTM">
    <molecule>RNA-directed RNA polymerase NS5</molecule>
    <text evidence="4">Phosphorylated on serines residues. This phosphorylation may trigger NS5 nuclear localization.</text>
</comment>
<comment type="similarity">
    <text evidence="16">In the N-terminal section; belongs to the class I-like SAM-binding methyltransferase superfamily. mRNA cap 0-1 NS5-type methyltransferase family.</text>
</comment>
<comment type="online information" name="Virus Particle ExploreR db">
    <link uri="https://viperdb.org/Info_Page.php?VDB=1na4"/>
    <text>Icosahedral capsid structure</text>
</comment>
<name>POLG_TBEVW</name>
<keyword id="KW-0002">3D-structure</keyword>
<keyword id="KW-0007">Acetylation</keyword>
<keyword id="KW-1072">Activation of host autophagy by virus</keyword>
<keyword id="KW-0067">ATP-binding</keyword>
<keyword id="KW-0167">Capsid protein</keyword>
<keyword id="KW-1165">Clathrin-mediated endocytosis of virus by host</keyword>
<keyword id="KW-0165">Cleavage on pair of basic residues</keyword>
<keyword id="KW-0903">Direct protein sequencing</keyword>
<keyword id="KW-1015">Disulfide bond</keyword>
<keyword id="KW-1170">Fusion of virus membrane with host endosomal membrane</keyword>
<keyword id="KW-1168">Fusion of virus membrane with host membrane</keyword>
<keyword id="KW-0325">Glycoprotein</keyword>
<keyword id="KW-0347">Helicase</keyword>
<keyword id="KW-1035">Host cytoplasm</keyword>
<keyword id="KW-1038">Host endoplasmic reticulum</keyword>
<keyword id="KW-1043">Host membrane</keyword>
<keyword id="KW-1048">Host nucleus</keyword>
<keyword id="KW-0945">Host-virus interaction</keyword>
<keyword id="KW-0378">Hydrolase</keyword>
<keyword id="KW-1090">Inhibition of host innate immune response by virus</keyword>
<keyword id="KW-1114">Inhibition of host interferon signaling pathway by virus</keyword>
<keyword id="KW-1105">Inhibition of host STAT1 by virus</keyword>
<keyword id="KW-1106">Inhibition of host STAT2 by virus</keyword>
<keyword id="KW-0922">Interferon antiviral system evasion</keyword>
<keyword id="KW-0472">Membrane</keyword>
<keyword id="KW-0479">Metal-binding</keyword>
<keyword id="KW-0489">Methyltransferase</keyword>
<keyword id="KW-0506">mRNA capping</keyword>
<keyword id="KW-0507">mRNA processing</keyword>
<keyword id="KW-0511">Multifunctional enzyme</keyword>
<keyword id="KW-0547">Nucleotide-binding</keyword>
<keyword id="KW-0548">Nucleotidyltransferase</keyword>
<keyword id="KW-0597">Phosphoprotein</keyword>
<keyword id="KW-0645">Protease</keyword>
<keyword id="KW-0694">RNA-binding</keyword>
<keyword id="KW-0696">RNA-directed RNA polymerase</keyword>
<keyword id="KW-0949">S-adenosyl-L-methionine</keyword>
<keyword id="KW-0964">Secreted</keyword>
<keyword id="KW-0720">Serine protease</keyword>
<keyword id="KW-0941">Suppressor of RNA silencing</keyword>
<keyword id="KW-0804">Transcription</keyword>
<keyword id="KW-0805">Transcription regulation</keyword>
<keyword id="KW-0808">Transferase</keyword>
<keyword id="KW-0812">Transmembrane</keyword>
<keyword id="KW-1133">Transmembrane helix</keyword>
<keyword id="KW-1161">Viral attachment to host cell</keyword>
<keyword id="KW-0261">Viral envelope protein</keyword>
<keyword id="KW-0899">Viral immunoevasion</keyword>
<keyword id="KW-1162">Viral penetration into host cytoplasm</keyword>
<keyword id="KW-0693">Viral RNA replication</keyword>
<keyword id="KW-0946">Virion</keyword>
<keyword id="KW-1164">Virus endocytosis by host</keyword>
<keyword id="KW-1160">Virus entry into host cell</keyword>
<keyword id="KW-0862">Zinc</keyword>
<dbReference type="EC" id="3.4.21.91"/>
<dbReference type="EC" id="3.6.1.15"/>
<dbReference type="EC" id="3.6.4.13"/>
<dbReference type="EC" id="2.1.1.56" evidence="16"/>
<dbReference type="EC" id="2.1.1.57" evidence="16"/>
<dbReference type="EC" id="2.7.7.48" evidence="11"/>
<dbReference type="EMBL" id="U27495">
    <property type="protein sequence ID" value="AAA86870.1"/>
    <property type="molecule type" value="Genomic_RNA"/>
</dbReference>
<dbReference type="PIR" id="A31052">
    <property type="entry name" value="GNWVNE"/>
</dbReference>
<dbReference type="RefSeq" id="NP_043135.1">
    <property type="nucleotide sequence ID" value="NC_001672.1"/>
</dbReference>
<dbReference type="PDB" id="1N6G">
    <property type="method" value="EM"/>
    <property type="resolution" value="16.00 A"/>
    <property type="chains" value="A/B/C=281-675"/>
</dbReference>
<dbReference type="PDB" id="1NA4">
    <property type="method" value="EM"/>
    <property type="chains" value="A/B/C=281-675"/>
</dbReference>
<dbReference type="PDB" id="1SVB">
    <property type="method" value="X-ray"/>
    <property type="resolution" value="1.90 A"/>
    <property type="chains" value="A=281-675"/>
</dbReference>
<dbReference type="PDB" id="1URZ">
    <property type="method" value="X-ray"/>
    <property type="resolution" value="2.70 A"/>
    <property type="chains" value="A/B/C/D/E/F=281-681"/>
</dbReference>
<dbReference type="PDB" id="6J5G">
    <property type="method" value="X-ray"/>
    <property type="resolution" value="3.29 A"/>
    <property type="chains" value="A=281-681"/>
</dbReference>
<dbReference type="PDB" id="6S8C">
    <property type="method" value="X-ray"/>
    <property type="resolution" value="2.57 A"/>
    <property type="chains" value="A/B/C=281-684, A/B/C=707-728"/>
</dbReference>
<dbReference type="PDB" id="7BLV">
    <property type="method" value="X-ray"/>
    <property type="resolution" value="2.10 A"/>
    <property type="chains" value="A=1662-2110"/>
</dbReference>
<dbReference type="PDB" id="7BM0">
    <property type="method" value="X-ray"/>
    <property type="resolution" value="1.90 A"/>
    <property type="chains" value="A=1662-2110"/>
</dbReference>
<dbReference type="PDB" id="7LSF">
    <property type="method" value="X-ray"/>
    <property type="resolution" value="2.24 A"/>
    <property type="chains" value="E=579-677"/>
</dbReference>
<dbReference type="PDB" id="7LSG">
    <property type="method" value="X-ray"/>
    <property type="resolution" value="1.86 A"/>
    <property type="chains" value="C=581-677"/>
</dbReference>
<dbReference type="PDB" id="7NXU">
    <property type="method" value="X-ray"/>
    <property type="resolution" value="2.10 A"/>
    <property type="chains" value="A=1662-2110"/>
</dbReference>
<dbReference type="PDB" id="7OJ4">
    <property type="method" value="X-ray"/>
    <property type="resolution" value="1.83 A"/>
    <property type="chains" value="A=1662-2110"/>
</dbReference>
<dbReference type="PDB" id="7QRE">
    <property type="method" value="X-ray"/>
    <property type="resolution" value="2.70 A"/>
    <property type="chains" value="A=281-680, D=117-204"/>
</dbReference>
<dbReference type="PDB" id="7QRF">
    <property type="method" value="X-ray"/>
    <property type="resolution" value="2.28 A"/>
    <property type="chains" value="A=281-680, D=117-245"/>
</dbReference>
<dbReference type="PDB" id="7QRG">
    <property type="method" value="X-ray"/>
    <property type="resolution" value="2.80 A"/>
    <property type="chains" value="A=281-680, D=117-245"/>
</dbReference>
<dbReference type="PDB" id="7YWQ">
    <property type="method" value="NMR"/>
    <property type="chains" value="A/B=18-96"/>
</dbReference>
<dbReference type="PDBsum" id="1N6G"/>
<dbReference type="PDBsum" id="1NA4"/>
<dbReference type="PDBsum" id="1SVB"/>
<dbReference type="PDBsum" id="1URZ"/>
<dbReference type="PDBsum" id="6J5G"/>
<dbReference type="PDBsum" id="6S8C"/>
<dbReference type="PDBsum" id="7BLV"/>
<dbReference type="PDBsum" id="7BM0"/>
<dbReference type="PDBsum" id="7LSF"/>
<dbReference type="PDBsum" id="7LSG"/>
<dbReference type="PDBsum" id="7NXU"/>
<dbReference type="PDBsum" id="7OJ4"/>
<dbReference type="PDBsum" id="7QRE"/>
<dbReference type="PDBsum" id="7QRF"/>
<dbReference type="PDBsum" id="7QRG"/>
<dbReference type="PDBsum" id="7YWQ"/>
<dbReference type="EMDB" id="EMD-14512"/>
<dbReference type="EMDB" id="EMD-17808"/>
<dbReference type="EMDB" id="EMD-17946"/>
<dbReference type="EMDB" id="EMD-17947"/>
<dbReference type="SMR" id="P14336"/>
<dbReference type="TCDB" id="1.G.3.1.1">
    <property type="family name" value="the viral pore-forming membrane fusion protein-3 (vmfp3) family"/>
</dbReference>
<dbReference type="iPTMnet" id="P14336"/>
<dbReference type="ABCD" id="P14336">
    <property type="antibodies" value="1 sequenced antibody"/>
</dbReference>
<dbReference type="GeneID" id="1489719"/>
<dbReference type="KEGG" id="vg:1489719"/>
<dbReference type="EvolutionaryTrace" id="P14336"/>
<dbReference type="Proteomes" id="UP000007402">
    <property type="component" value="Segment"/>
</dbReference>
<dbReference type="GO" id="GO:0005576">
    <property type="term" value="C:extracellular region"/>
    <property type="evidence" value="ECO:0007669"/>
    <property type="project" value="UniProtKB-SubCell"/>
</dbReference>
<dbReference type="GO" id="GO:0044167">
    <property type="term" value="C:host cell endoplasmic reticulum membrane"/>
    <property type="evidence" value="ECO:0007669"/>
    <property type="project" value="UniProtKB-SubCell"/>
</dbReference>
<dbReference type="GO" id="GO:0042025">
    <property type="term" value="C:host cell nucleus"/>
    <property type="evidence" value="ECO:0007669"/>
    <property type="project" value="UniProtKB-SubCell"/>
</dbReference>
<dbReference type="GO" id="GO:0044220">
    <property type="term" value="C:host cell perinuclear region of cytoplasm"/>
    <property type="evidence" value="ECO:0007669"/>
    <property type="project" value="UniProtKB-SubCell"/>
</dbReference>
<dbReference type="GO" id="GO:0016020">
    <property type="term" value="C:membrane"/>
    <property type="evidence" value="ECO:0007669"/>
    <property type="project" value="UniProtKB-KW"/>
</dbReference>
<dbReference type="GO" id="GO:0019028">
    <property type="term" value="C:viral capsid"/>
    <property type="evidence" value="ECO:0007669"/>
    <property type="project" value="UniProtKB-KW"/>
</dbReference>
<dbReference type="GO" id="GO:0019031">
    <property type="term" value="C:viral envelope"/>
    <property type="evidence" value="ECO:0007669"/>
    <property type="project" value="UniProtKB-KW"/>
</dbReference>
<dbReference type="GO" id="GO:0055036">
    <property type="term" value="C:virion membrane"/>
    <property type="evidence" value="ECO:0007669"/>
    <property type="project" value="UniProtKB-SubCell"/>
</dbReference>
<dbReference type="GO" id="GO:0005524">
    <property type="term" value="F:ATP binding"/>
    <property type="evidence" value="ECO:0007669"/>
    <property type="project" value="UniProtKB-KW"/>
</dbReference>
<dbReference type="GO" id="GO:0016887">
    <property type="term" value="F:ATP hydrolysis activity"/>
    <property type="evidence" value="ECO:0007669"/>
    <property type="project" value="RHEA"/>
</dbReference>
<dbReference type="GO" id="GO:0003725">
    <property type="term" value="F:double-stranded RNA binding"/>
    <property type="evidence" value="ECO:0007669"/>
    <property type="project" value="InterPro"/>
</dbReference>
<dbReference type="GO" id="GO:0046872">
    <property type="term" value="F:metal ion binding"/>
    <property type="evidence" value="ECO:0007669"/>
    <property type="project" value="UniProtKB-KW"/>
</dbReference>
<dbReference type="GO" id="GO:0004483">
    <property type="term" value="F:mRNA (nucleoside-2'-O-)-methyltransferase activity"/>
    <property type="evidence" value="ECO:0007669"/>
    <property type="project" value="UniProtKB-EC"/>
</dbReference>
<dbReference type="GO" id="GO:0004482">
    <property type="term" value="F:mRNA 5'-cap (guanine-N7-)-methyltransferase activity"/>
    <property type="evidence" value="ECO:0007669"/>
    <property type="project" value="UniProtKB-EC"/>
</dbReference>
<dbReference type="GO" id="GO:0046983">
    <property type="term" value="F:protein dimerization activity"/>
    <property type="evidence" value="ECO:0007669"/>
    <property type="project" value="InterPro"/>
</dbReference>
<dbReference type="GO" id="GO:0003724">
    <property type="term" value="F:RNA helicase activity"/>
    <property type="evidence" value="ECO:0007669"/>
    <property type="project" value="UniProtKB-EC"/>
</dbReference>
<dbReference type="GO" id="GO:0003968">
    <property type="term" value="F:RNA-directed RNA polymerase activity"/>
    <property type="evidence" value="ECO:0007669"/>
    <property type="project" value="UniProtKB-KW"/>
</dbReference>
<dbReference type="GO" id="GO:0004252">
    <property type="term" value="F:serine-type endopeptidase activity"/>
    <property type="evidence" value="ECO:0007669"/>
    <property type="project" value="InterPro"/>
</dbReference>
<dbReference type="GO" id="GO:0005198">
    <property type="term" value="F:structural molecule activity"/>
    <property type="evidence" value="ECO:0007669"/>
    <property type="project" value="InterPro"/>
</dbReference>
<dbReference type="GO" id="GO:0075512">
    <property type="term" value="P:clathrin-dependent endocytosis of virus by host cell"/>
    <property type="evidence" value="ECO:0007669"/>
    <property type="project" value="UniProtKB-KW"/>
</dbReference>
<dbReference type="GO" id="GO:0039654">
    <property type="term" value="P:fusion of virus membrane with host endosome membrane"/>
    <property type="evidence" value="ECO:0007669"/>
    <property type="project" value="UniProtKB-KW"/>
</dbReference>
<dbReference type="GO" id="GO:0006508">
    <property type="term" value="P:proteolysis"/>
    <property type="evidence" value="ECO:0007669"/>
    <property type="project" value="UniProtKB-KW"/>
</dbReference>
<dbReference type="GO" id="GO:0039520">
    <property type="term" value="P:symbiont-mediated activation of host autophagy"/>
    <property type="evidence" value="ECO:0007669"/>
    <property type="project" value="UniProtKB-KW"/>
</dbReference>
<dbReference type="GO" id="GO:0052170">
    <property type="term" value="P:symbiont-mediated suppression of host innate immune response"/>
    <property type="evidence" value="ECO:0007669"/>
    <property type="project" value="UniProtKB-KW"/>
</dbReference>
<dbReference type="GO" id="GO:0039563">
    <property type="term" value="P:symbiont-mediated suppression of host JAK-STAT cascade via inhibition of STAT1 activity"/>
    <property type="evidence" value="ECO:0007669"/>
    <property type="project" value="UniProtKB-KW"/>
</dbReference>
<dbReference type="GO" id="GO:0039564">
    <property type="term" value="P:symbiont-mediated suppression of host JAK-STAT cascade via inhibition of STAT2 activity"/>
    <property type="evidence" value="ECO:0007669"/>
    <property type="project" value="UniProtKB-KW"/>
</dbReference>
<dbReference type="GO" id="GO:0039502">
    <property type="term" value="P:symbiont-mediated suppression of host type I interferon-mediated signaling pathway"/>
    <property type="evidence" value="ECO:0007669"/>
    <property type="project" value="UniProtKB-KW"/>
</dbReference>
<dbReference type="GO" id="GO:0039694">
    <property type="term" value="P:viral RNA genome replication"/>
    <property type="evidence" value="ECO:0007669"/>
    <property type="project" value="InterPro"/>
</dbReference>
<dbReference type="GO" id="GO:0019062">
    <property type="term" value="P:virion attachment to host cell"/>
    <property type="evidence" value="ECO:0007669"/>
    <property type="project" value="UniProtKB-KW"/>
</dbReference>
<dbReference type="CDD" id="cd20761">
    <property type="entry name" value="capping_2-OMTase_Flaviviridae"/>
    <property type="match status" value="1"/>
</dbReference>
<dbReference type="CDD" id="cd17931">
    <property type="entry name" value="DEXHc_viral_Ns3"/>
    <property type="match status" value="1"/>
</dbReference>
<dbReference type="CDD" id="cd12149">
    <property type="entry name" value="Flavi_E_C"/>
    <property type="match status" value="1"/>
</dbReference>
<dbReference type="CDD" id="cd23204">
    <property type="entry name" value="Flavivirus_RdRp"/>
    <property type="match status" value="1"/>
</dbReference>
<dbReference type="FunFam" id="1.20.1280.260:FF:000001">
    <property type="entry name" value="Envelope glycoprotein"/>
    <property type="match status" value="1"/>
</dbReference>
<dbReference type="FunFam" id="1.10.8.970:FF:000005">
    <property type="entry name" value="Genome polyprotein"/>
    <property type="match status" value="1"/>
</dbReference>
<dbReference type="FunFam" id="2.40.10.120:FF:000016">
    <property type="entry name" value="Genome polyprotein"/>
    <property type="match status" value="1"/>
</dbReference>
<dbReference type="FunFam" id="2.60.40.350:FF:000003">
    <property type="entry name" value="Genome polyprotein"/>
    <property type="match status" value="1"/>
</dbReference>
<dbReference type="FunFam" id="3.30.70.2840:FF:000002">
    <property type="entry name" value="Genome polyprotein"/>
    <property type="match status" value="1"/>
</dbReference>
<dbReference type="FunFam" id="3.30.70.2840:FF:000004">
    <property type="entry name" value="Genome polyprotein"/>
    <property type="match status" value="1"/>
</dbReference>
<dbReference type="Gene3D" id="1.10.260.90">
    <property type="match status" value="1"/>
</dbReference>
<dbReference type="Gene3D" id="1.20.1280.260">
    <property type="match status" value="1"/>
</dbReference>
<dbReference type="Gene3D" id="2.40.10.120">
    <property type="match status" value="1"/>
</dbReference>
<dbReference type="Gene3D" id="2.60.40.350">
    <property type="match status" value="1"/>
</dbReference>
<dbReference type="Gene3D" id="1.10.8.970">
    <property type="entry name" value="Flavivirus envelope glycoprotein M-like"/>
    <property type="match status" value="1"/>
</dbReference>
<dbReference type="Gene3D" id="2.60.260.50">
    <property type="entry name" value="Flavivirus polyprotein propeptide domain"/>
    <property type="match status" value="1"/>
</dbReference>
<dbReference type="Gene3D" id="3.30.70.2840">
    <property type="entry name" value="Flavivirus RNA-directed RNA polymerase, thumb domain"/>
    <property type="match status" value="3"/>
</dbReference>
<dbReference type="Gene3D" id="3.40.50.300">
    <property type="entry name" value="P-loop containing nucleotide triphosphate hydrolases"/>
    <property type="match status" value="2"/>
</dbReference>
<dbReference type="Gene3D" id="2.60.98.10">
    <property type="entry name" value="Tick-borne Encephalitis virus Glycoprotein, domain 1"/>
    <property type="match status" value="1"/>
</dbReference>
<dbReference type="Gene3D" id="3.40.50.150">
    <property type="entry name" value="Vaccinia Virus protein VP39"/>
    <property type="match status" value="1"/>
</dbReference>
<dbReference type="Gene3D" id="3.30.67.10">
    <property type="entry name" value="Viral Envelope Glycoprotein, domain 2"/>
    <property type="match status" value="1"/>
</dbReference>
<dbReference type="Gene3D" id="3.30.387.10">
    <property type="entry name" value="Viral Envelope Glycoprotein, domain 3"/>
    <property type="match status" value="1"/>
</dbReference>
<dbReference type="InterPro" id="IPR043502">
    <property type="entry name" value="DNA/RNA_pol_sf"/>
</dbReference>
<dbReference type="InterPro" id="IPR000069">
    <property type="entry name" value="Env_glycoprot_M_flavivir"/>
</dbReference>
<dbReference type="InterPro" id="IPR038302">
    <property type="entry name" value="Env_glycoprot_M_sf_flavivir"/>
</dbReference>
<dbReference type="InterPro" id="IPR013755">
    <property type="entry name" value="Flav_gly_cen_dom_subdom1"/>
</dbReference>
<dbReference type="InterPro" id="IPR001122">
    <property type="entry name" value="Flavi_capsidC"/>
</dbReference>
<dbReference type="InterPro" id="IPR011492">
    <property type="entry name" value="Flavi_DEAD"/>
</dbReference>
<dbReference type="InterPro" id="IPR027287">
    <property type="entry name" value="Flavi_E_Ig-like"/>
</dbReference>
<dbReference type="InterPro" id="IPR026470">
    <property type="entry name" value="Flavi_E_Stem/Anchor_dom"/>
</dbReference>
<dbReference type="InterPro" id="IPR038345">
    <property type="entry name" value="Flavi_E_Stem/Anchor_dom_sf"/>
</dbReference>
<dbReference type="InterPro" id="IPR011998">
    <property type="entry name" value="Flavi_Glycoprot_E_cen/dimer"/>
</dbReference>
<dbReference type="InterPro" id="IPR001157">
    <property type="entry name" value="Flavi_NS1"/>
</dbReference>
<dbReference type="InterPro" id="IPR000752">
    <property type="entry name" value="Flavi_NS2A"/>
</dbReference>
<dbReference type="InterPro" id="IPR000487">
    <property type="entry name" value="Flavi_NS2B"/>
</dbReference>
<dbReference type="InterPro" id="IPR001850">
    <property type="entry name" value="Flavi_NS3_S7"/>
</dbReference>
<dbReference type="InterPro" id="IPR000404">
    <property type="entry name" value="Flavi_NS4A"/>
</dbReference>
<dbReference type="InterPro" id="IPR001528">
    <property type="entry name" value="Flavi_NS4B"/>
</dbReference>
<dbReference type="InterPro" id="IPR046811">
    <property type="entry name" value="Flavi_NS5_thumb"/>
</dbReference>
<dbReference type="InterPro" id="IPR002535">
    <property type="entry name" value="Flavi_propep"/>
</dbReference>
<dbReference type="InterPro" id="IPR038688">
    <property type="entry name" value="Flavi_propep_sf"/>
</dbReference>
<dbReference type="InterPro" id="IPR047530">
    <property type="entry name" value="Flavi_RdRp"/>
</dbReference>
<dbReference type="InterPro" id="IPR000208">
    <property type="entry name" value="Flavi_RdRp_fingers/palm"/>
</dbReference>
<dbReference type="InterPro" id="IPR000336">
    <property type="entry name" value="Flavivir/Alphavir_Ig-like_sf"/>
</dbReference>
<dbReference type="InterPro" id="IPR014412">
    <property type="entry name" value="Gen_Poly_FLV"/>
</dbReference>
<dbReference type="InterPro" id="IPR036253">
    <property type="entry name" value="Glycoprot_cen/dimer_sf"/>
</dbReference>
<dbReference type="InterPro" id="IPR038055">
    <property type="entry name" value="Glycoprot_E_dimer_dom"/>
</dbReference>
<dbReference type="InterPro" id="IPR013756">
    <property type="entry name" value="GlyE_cen_dom_subdom2"/>
</dbReference>
<dbReference type="InterPro" id="IPR014001">
    <property type="entry name" value="Helicase_ATP-bd"/>
</dbReference>
<dbReference type="InterPro" id="IPR001650">
    <property type="entry name" value="Helicase_C-like"/>
</dbReference>
<dbReference type="InterPro" id="IPR014756">
    <property type="entry name" value="Ig_E-set"/>
</dbReference>
<dbReference type="InterPro" id="IPR026490">
    <property type="entry name" value="mRNA_cap_0/1_MeTrfase"/>
</dbReference>
<dbReference type="InterPro" id="IPR049486">
    <property type="entry name" value="NS3-hel_C_flaviviridae"/>
</dbReference>
<dbReference type="InterPro" id="IPR027417">
    <property type="entry name" value="P-loop_NTPase"/>
</dbReference>
<dbReference type="InterPro" id="IPR009003">
    <property type="entry name" value="Peptidase_S1_PA"/>
</dbReference>
<dbReference type="InterPro" id="IPR007094">
    <property type="entry name" value="RNA-dir_pol_PSvirus"/>
</dbReference>
<dbReference type="InterPro" id="IPR002877">
    <property type="entry name" value="RNA_MeTrfase_FtsJ_dom"/>
</dbReference>
<dbReference type="InterPro" id="IPR029063">
    <property type="entry name" value="SAM-dependent_MTases_sf"/>
</dbReference>
<dbReference type="NCBIfam" id="TIGR04240">
    <property type="entry name" value="flavi_E_stem"/>
    <property type="match status" value="1"/>
</dbReference>
<dbReference type="Pfam" id="PF20907">
    <property type="entry name" value="Flav_NS3-hel_C"/>
    <property type="match status" value="1"/>
</dbReference>
<dbReference type="Pfam" id="PF01003">
    <property type="entry name" value="Flavi_capsid"/>
    <property type="match status" value="1"/>
</dbReference>
<dbReference type="Pfam" id="PF07652">
    <property type="entry name" value="Flavi_DEAD"/>
    <property type="match status" value="1"/>
</dbReference>
<dbReference type="Pfam" id="PF21659">
    <property type="entry name" value="Flavi_E_stem"/>
    <property type="match status" value="1"/>
</dbReference>
<dbReference type="Pfam" id="PF02832">
    <property type="entry name" value="Flavi_glycop_C"/>
    <property type="match status" value="1"/>
</dbReference>
<dbReference type="Pfam" id="PF00869">
    <property type="entry name" value="Flavi_glycoprot"/>
    <property type="match status" value="1"/>
</dbReference>
<dbReference type="Pfam" id="PF01004">
    <property type="entry name" value="Flavi_M"/>
    <property type="match status" value="1"/>
</dbReference>
<dbReference type="Pfam" id="PF00948">
    <property type="entry name" value="Flavi_NS1"/>
    <property type="match status" value="1"/>
</dbReference>
<dbReference type="Pfam" id="PF01005">
    <property type="entry name" value="Flavi_NS2A"/>
    <property type="match status" value="1"/>
</dbReference>
<dbReference type="Pfam" id="PF01350">
    <property type="entry name" value="Flavi_NS4A"/>
    <property type="match status" value="1"/>
</dbReference>
<dbReference type="Pfam" id="PF01349">
    <property type="entry name" value="Flavi_NS4B"/>
    <property type="match status" value="1"/>
</dbReference>
<dbReference type="Pfam" id="PF00972">
    <property type="entry name" value="Flavi_NS5"/>
    <property type="match status" value="1"/>
</dbReference>
<dbReference type="Pfam" id="PF20483">
    <property type="entry name" value="Flavi_NS5_thumb"/>
    <property type="match status" value="1"/>
</dbReference>
<dbReference type="Pfam" id="PF01570">
    <property type="entry name" value="Flavi_propep"/>
    <property type="match status" value="1"/>
</dbReference>
<dbReference type="Pfam" id="PF01728">
    <property type="entry name" value="FtsJ"/>
    <property type="match status" value="1"/>
</dbReference>
<dbReference type="Pfam" id="PF00949">
    <property type="entry name" value="Peptidase_S7"/>
    <property type="match status" value="1"/>
</dbReference>
<dbReference type="PIRSF" id="PIRSF003817">
    <property type="entry name" value="Gen_Poly_FLV"/>
    <property type="match status" value="1"/>
</dbReference>
<dbReference type="SMART" id="SM00487">
    <property type="entry name" value="DEXDc"/>
    <property type="match status" value="1"/>
</dbReference>
<dbReference type="SMART" id="SM00490">
    <property type="entry name" value="HELICc"/>
    <property type="match status" value="1"/>
</dbReference>
<dbReference type="SUPFAM" id="SSF56672">
    <property type="entry name" value="DNA/RNA polymerases"/>
    <property type="match status" value="1"/>
</dbReference>
<dbReference type="SUPFAM" id="SSF81296">
    <property type="entry name" value="E set domains"/>
    <property type="match status" value="1"/>
</dbReference>
<dbReference type="SUPFAM" id="SSF52540">
    <property type="entry name" value="P-loop containing nucleoside triphosphate hydrolases"/>
    <property type="match status" value="2"/>
</dbReference>
<dbReference type="SUPFAM" id="SSF53335">
    <property type="entry name" value="S-adenosyl-L-methionine-dependent methyltransferases"/>
    <property type="match status" value="1"/>
</dbReference>
<dbReference type="SUPFAM" id="SSF50494">
    <property type="entry name" value="Trypsin-like serine proteases"/>
    <property type="match status" value="1"/>
</dbReference>
<dbReference type="SUPFAM" id="SSF56983">
    <property type="entry name" value="Viral glycoprotein, central and dimerisation domains"/>
    <property type="match status" value="1"/>
</dbReference>
<dbReference type="PROSITE" id="PS51527">
    <property type="entry name" value="FLAVIVIRUS_NS2B"/>
    <property type="match status" value="1"/>
</dbReference>
<dbReference type="PROSITE" id="PS51528">
    <property type="entry name" value="FLAVIVIRUS_NS3PRO"/>
    <property type="match status" value="1"/>
</dbReference>
<dbReference type="PROSITE" id="PS51192">
    <property type="entry name" value="HELICASE_ATP_BIND_1"/>
    <property type="match status" value="1"/>
</dbReference>
<dbReference type="PROSITE" id="PS51194">
    <property type="entry name" value="HELICASE_CTER"/>
    <property type="match status" value="1"/>
</dbReference>
<dbReference type="PROSITE" id="PS50507">
    <property type="entry name" value="RDRP_SSRNA_POS"/>
    <property type="match status" value="1"/>
</dbReference>
<dbReference type="PROSITE" id="PS51591">
    <property type="entry name" value="RNA_CAP01_NS5_MT"/>
    <property type="match status" value="1"/>
</dbReference>
<feature type="initiator methionine" description="Removed" evidence="21">
    <location>
        <position position="1"/>
    </location>
</feature>
<feature type="chain" id="PRO_0000405175" description="Genome polyprotein">
    <location>
        <begin position="2"/>
        <end position="3414"/>
    </location>
</feature>
<feature type="chain" id="PRO_0000037815" description="Capsid protein C" evidence="1">
    <location>
        <begin position="2"/>
        <end position="96"/>
    </location>
</feature>
<feature type="propeptide" id="PRO_0000405176" description="ER anchor for the capsid protein C, removed in mature form by serine protease NS3" evidence="1">
    <location>
        <begin position="97"/>
        <end position="117"/>
    </location>
</feature>
<feature type="chain" id="PRO_0000405177" description="Protein prM" evidence="2">
    <location>
        <begin position="118"/>
        <end position="280"/>
    </location>
</feature>
<feature type="chain" id="PRO_0000037816" description="Peptide pr" evidence="2">
    <location>
        <begin position="118"/>
        <end position="205"/>
    </location>
</feature>
<feature type="chain" id="PRO_0000037817" description="Small envelope protein M" evidence="21">
    <location>
        <begin position="206"/>
        <end position="280"/>
    </location>
</feature>
<feature type="chain" id="PRO_0000037818" description="Envelope protein E" evidence="2">
    <location>
        <begin position="281"/>
        <end position="776"/>
    </location>
</feature>
<feature type="chain" id="PRO_0000037819" description="Non-structural protein 1" evidence="1">
    <location>
        <begin position="777"/>
        <end position="1128"/>
    </location>
</feature>
<feature type="chain" id="PRO_0000037820" description="Non-structural protein 2A" evidence="2">
    <location>
        <begin position="1129"/>
        <end position="1358"/>
    </location>
</feature>
<feature type="chain" id="PRO_0000037821" description="Serine protease subunit NS2B" evidence="1">
    <location>
        <begin position="1359"/>
        <end position="1489"/>
    </location>
</feature>
<feature type="chain" id="PRO_0000037822" description="Serine protease NS3" evidence="1">
    <location>
        <begin position="1490"/>
        <end position="2110"/>
    </location>
</feature>
<feature type="chain" id="PRO_0000037823" description="Non-structural protein 4A" evidence="1">
    <location>
        <begin position="2111"/>
        <end position="2236"/>
    </location>
</feature>
<feature type="peptide" id="PRO_0000405178" description="Peptide 2k" evidence="1">
    <location>
        <begin position="2237"/>
        <end position="2259"/>
    </location>
</feature>
<feature type="chain" id="PRO_0000037824" description="Non-structural protein 4B" evidence="1">
    <location>
        <begin position="2260"/>
        <end position="2511"/>
    </location>
</feature>
<feature type="chain" id="PRO_0000037825" description="RNA-directed RNA polymerase NS5" evidence="1">
    <location>
        <begin position="2512"/>
        <end position="3414"/>
    </location>
</feature>
<feature type="topological domain" description="Cytoplasmic" evidence="9">
    <location>
        <begin position="2"/>
        <end position="98"/>
    </location>
</feature>
<feature type="transmembrane region" description="Helical" evidence="9">
    <location>
        <begin position="99"/>
        <end position="119"/>
    </location>
</feature>
<feature type="topological domain" description="Extracellular" evidence="9">
    <location>
        <begin position="120"/>
        <end position="242"/>
    </location>
</feature>
<feature type="transmembrane region" description="Helical" evidence="9">
    <location>
        <begin position="243"/>
        <end position="260"/>
    </location>
</feature>
<feature type="topological domain" description="Cytoplasmic" evidence="9">
    <location>
        <position position="261"/>
    </location>
</feature>
<feature type="transmembrane region" description="Helical" evidence="9">
    <location>
        <begin position="262"/>
        <end position="280"/>
    </location>
</feature>
<feature type="topological domain" description="Extracellular" evidence="9">
    <location>
        <begin position="281"/>
        <end position="727"/>
    </location>
</feature>
<feature type="transmembrane region" description="Helical" evidence="9">
    <location>
        <begin position="728"/>
        <end position="748"/>
    </location>
</feature>
<feature type="topological domain" description="Extracellular" evidence="9">
    <location>
        <begin position="749"/>
        <end position="755"/>
    </location>
</feature>
<feature type="transmembrane region" description="Helical" evidence="9">
    <location>
        <begin position="756"/>
        <end position="776"/>
    </location>
</feature>
<feature type="topological domain" description="Extracellular" evidence="9">
    <location>
        <begin position="777"/>
        <end position="1132"/>
    </location>
</feature>
<feature type="transmembrane region" description="Helical" evidence="9">
    <location>
        <begin position="1133"/>
        <end position="1153"/>
    </location>
</feature>
<feature type="topological domain" description="Cytoplasmic" evidence="9">
    <location>
        <begin position="1154"/>
        <end position="1158"/>
    </location>
</feature>
<feature type="transmembrane region" description="Helical" evidence="9">
    <location>
        <begin position="1159"/>
        <end position="1179"/>
    </location>
</feature>
<feature type="topological domain" description="Lumenal" evidence="9">
    <location>
        <begin position="1180"/>
        <end position="1187"/>
    </location>
</feature>
<feature type="transmembrane region" description="Helical" evidence="9">
    <location>
        <begin position="1188"/>
        <end position="1208"/>
    </location>
</feature>
<feature type="topological domain" description="Cytoplasmic" evidence="9">
    <location>
        <begin position="1209"/>
        <end position="1293"/>
    </location>
</feature>
<feature type="transmembrane region" description="Helical" evidence="9">
    <location>
        <begin position="1294"/>
        <end position="1314"/>
    </location>
</feature>
<feature type="topological domain" description="Lumenal" evidence="9">
    <location>
        <begin position="1315"/>
        <end position="1327"/>
    </location>
</feature>
<feature type="transmembrane region" description="Helical" evidence="9">
    <location>
        <begin position="1328"/>
        <end position="1348"/>
    </location>
</feature>
<feature type="topological domain" description="Cytoplasmic" evidence="9">
    <location>
        <begin position="1349"/>
        <end position="1359"/>
    </location>
</feature>
<feature type="transmembrane region" description="Helical" evidence="9">
    <location>
        <begin position="1360"/>
        <end position="1378"/>
    </location>
</feature>
<feature type="topological domain" description="Lumenal" evidence="9">
    <location>
        <begin position="1379"/>
        <end position="1382"/>
    </location>
</feature>
<feature type="transmembrane region" description="Helical" evidence="9">
    <location>
        <begin position="1383"/>
        <end position="1403"/>
    </location>
</feature>
<feature type="topological domain" description="Cytoplasmic" evidence="9">
    <location>
        <begin position="1404"/>
        <end position="1454"/>
    </location>
</feature>
<feature type="intramembrane region" description="Helical" evidence="9">
    <location>
        <begin position="1455"/>
        <end position="1475"/>
    </location>
</feature>
<feature type="topological domain" description="Cytoplasmic" evidence="9">
    <location>
        <begin position="1476"/>
        <end position="2160"/>
    </location>
</feature>
<feature type="transmembrane region" description="Helical" evidence="9">
    <location>
        <begin position="2161"/>
        <end position="2181"/>
    </location>
</feature>
<feature type="topological domain" description="Lumenal" evidence="9">
    <location>
        <begin position="2182"/>
        <end position="2189"/>
    </location>
</feature>
<feature type="intramembrane region" description="Helical" evidence="9">
    <location>
        <begin position="2190"/>
        <end position="2210"/>
    </location>
</feature>
<feature type="topological domain" description="Lumenal" evidence="9">
    <location>
        <position position="2211"/>
    </location>
</feature>
<feature type="transmembrane region" description="Helical" evidence="9">
    <location>
        <begin position="2212"/>
        <end position="2232"/>
    </location>
</feature>
<feature type="topological domain" description="Cytoplasmic" evidence="9">
    <location>
        <begin position="2233"/>
        <end position="2244"/>
    </location>
</feature>
<feature type="transmembrane region" description="Helical; Note=Signal for NS4B" evidence="9">
    <location>
        <begin position="2245"/>
        <end position="2265"/>
    </location>
</feature>
<feature type="topological domain" description="Lumenal" evidence="9">
    <location>
        <begin position="2266"/>
        <end position="2299"/>
    </location>
</feature>
<feature type="intramembrane region" description="Helical" evidence="9">
    <location>
        <begin position="2300"/>
        <end position="2320"/>
    </location>
</feature>
<feature type="topological domain" description="Lumenal" evidence="9">
    <location>
        <begin position="2321"/>
        <end position="2343"/>
    </location>
</feature>
<feature type="intramembrane region" description="Helical" evidence="9">
    <location>
        <begin position="2344"/>
        <end position="2364"/>
    </location>
</feature>
<feature type="topological domain" description="Lumenal" evidence="9">
    <location>
        <begin position="2365"/>
        <end position="2368"/>
    </location>
</feature>
<feature type="transmembrane region" description="Helical" evidence="9">
    <location>
        <begin position="2369"/>
        <end position="2389"/>
    </location>
</feature>
<feature type="topological domain" description="Cytoplasmic" evidence="9">
    <location>
        <begin position="2390"/>
        <end position="2432"/>
    </location>
</feature>
<feature type="transmembrane region" description="Helical" evidence="9">
    <location>
        <begin position="2433"/>
        <end position="2453"/>
    </location>
</feature>
<feature type="topological domain" description="Lumenal" evidence="9">
    <location>
        <begin position="2454"/>
        <end position="2477"/>
    </location>
</feature>
<feature type="transmembrane region" description="Helical" evidence="9">
    <location>
        <begin position="2478"/>
        <end position="2498"/>
    </location>
</feature>
<feature type="topological domain" description="Cytoplasmic" evidence="9">
    <location>
        <begin position="2499"/>
        <end position="3414"/>
    </location>
</feature>
<feature type="domain" description="Peptidase S7" evidence="15">
    <location>
        <begin position="1490"/>
        <end position="1669"/>
    </location>
</feature>
<feature type="domain" description="Helicase ATP-binding" evidence="12">
    <location>
        <begin position="1675"/>
        <end position="1831"/>
    </location>
</feature>
<feature type="domain" description="Helicase C-terminal" evidence="13">
    <location>
        <begin position="1841"/>
        <end position="2000"/>
    </location>
</feature>
<feature type="domain" description="mRNA cap 0-1 NS5-type MT" evidence="16">
    <location>
        <begin position="2512"/>
        <end position="2776"/>
    </location>
</feature>
<feature type="domain" description="RdRp catalytic" evidence="11">
    <location>
        <begin position="3040"/>
        <end position="3189"/>
    </location>
</feature>
<feature type="region of interest" description="Disordered" evidence="17">
    <location>
        <begin position="1"/>
        <end position="30"/>
    </location>
</feature>
<feature type="region of interest" description="Fusion peptide" evidence="18">
    <location>
        <begin position="378"/>
        <end position="391"/>
    </location>
</feature>
<feature type="region of interest" description="Interacts with and activates NS3 protease" evidence="14">
    <location>
        <begin position="1410"/>
        <end position="1449"/>
    </location>
</feature>
<feature type="region of interest" description="Interaction with host SCRIB" evidence="5">
    <location>
        <begin position="2730"/>
        <end position="2734"/>
    </location>
</feature>
<feature type="short sequence motif" description="DEAH box" evidence="12">
    <location>
        <begin position="1779"/>
        <end position="1782"/>
    </location>
</feature>
<feature type="active site" description="Charge relay system; for serine protease NS3 activity" evidence="15">
    <location>
        <position position="1543"/>
    </location>
</feature>
<feature type="active site" description="Charge relay system; for serine protease NS3 activity" evidence="15">
    <location>
        <position position="1567"/>
    </location>
</feature>
<feature type="active site" description="Charge relay system; for serine protease NS3 activity" evidence="15">
    <location>
        <position position="1627"/>
    </location>
</feature>
<feature type="active site" description="For 2'-O-MTase activity" evidence="7">
    <location>
        <position position="2572"/>
    </location>
</feature>
<feature type="active site" description="For 2'-O-MTase activity" evidence="7">
    <location>
        <position position="2657"/>
    </location>
</feature>
<feature type="active site" description="For 2'-O-MTase activity" evidence="7">
    <location>
        <position position="2694"/>
    </location>
</feature>
<feature type="active site" description="For 2'-O-MTase activity" evidence="7">
    <location>
        <position position="2730"/>
    </location>
</feature>
<feature type="binding site" evidence="12">
    <location>
        <begin position="1688"/>
        <end position="1695"/>
    </location>
    <ligand>
        <name>ATP</name>
        <dbReference type="ChEBI" id="CHEBI:30616"/>
    </ligand>
</feature>
<feature type="binding site" evidence="16">
    <location>
        <position position="2567"/>
    </location>
    <ligand>
        <name>S-adenosyl-L-methionine</name>
        <dbReference type="ChEBI" id="CHEBI:59789"/>
    </ligand>
</feature>
<feature type="binding site" evidence="16">
    <location>
        <position position="2597"/>
    </location>
    <ligand>
        <name>S-adenosyl-L-methionine</name>
        <dbReference type="ChEBI" id="CHEBI:59789"/>
    </ligand>
</feature>
<feature type="binding site" evidence="16">
    <location>
        <position position="2598"/>
    </location>
    <ligand>
        <name>S-adenosyl-L-methionine</name>
        <dbReference type="ChEBI" id="CHEBI:59789"/>
    </ligand>
</feature>
<feature type="binding site" evidence="16">
    <location>
        <position position="2615"/>
    </location>
    <ligand>
        <name>S-adenosyl-L-methionine</name>
        <dbReference type="ChEBI" id="CHEBI:59789"/>
    </ligand>
</feature>
<feature type="binding site" evidence="16">
    <location>
        <position position="2616"/>
    </location>
    <ligand>
        <name>S-adenosyl-L-methionine</name>
        <dbReference type="ChEBI" id="CHEBI:59789"/>
    </ligand>
</feature>
<feature type="binding site" evidence="16">
    <location>
        <position position="2642"/>
    </location>
    <ligand>
        <name>S-adenosyl-L-methionine</name>
        <dbReference type="ChEBI" id="CHEBI:59789"/>
    </ligand>
</feature>
<feature type="binding site" evidence="16">
    <location>
        <position position="2643"/>
    </location>
    <ligand>
        <name>S-adenosyl-L-methionine</name>
        <dbReference type="ChEBI" id="CHEBI:59789"/>
    </ligand>
</feature>
<feature type="binding site" evidence="16">
    <location>
        <position position="2658"/>
    </location>
    <ligand>
        <name>S-adenosyl-L-methionine</name>
        <dbReference type="ChEBI" id="CHEBI:59789"/>
    </ligand>
</feature>
<feature type="binding site" evidence="16">
    <location>
        <position position="2732"/>
    </location>
    <ligand>
        <name>S-adenosyl-L-methionine</name>
        <dbReference type="ChEBI" id="CHEBI:59789"/>
    </ligand>
</feature>
<feature type="binding site" evidence="3">
    <location>
        <position position="2950"/>
    </location>
    <ligand>
        <name>Zn(2+)</name>
        <dbReference type="ChEBI" id="CHEBI:29105"/>
        <label>1</label>
    </ligand>
</feature>
<feature type="binding site" evidence="3">
    <location>
        <position position="2954"/>
    </location>
    <ligand>
        <name>Zn(2+)</name>
        <dbReference type="ChEBI" id="CHEBI:29105"/>
        <label>1</label>
    </ligand>
</feature>
<feature type="binding site" evidence="3">
    <location>
        <position position="2959"/>
    </location>
    <ligand>
        <name>Zn(2+)</name>
        <dbReference type="ChEBI" id="CHEBI:29105"/>
        <label>1</label>
    </ligand>
</feature>
<feature type="binding site" evidence="3">
    <location>
        <position position="2962"/>
    </location>
    <ligand>
        <name>Zn(2+)</name>
        <dbReference type="ChEBI" id="CHEBI:29105"/>
        <label>1</label>
    </ligand>
</feature>
<feature type="binding site" evidence="3">
    <location>
        <position position="3224"/>
    </location>
    <ligand>
        <name>Zn(2+)</name>
        <dbReference type="ChEBI" id="CHEBI:29105"/>
        <label>2</label>
    </ligand>
</feature>
<feature type="binding site" evidence="3">
    <location>
        <position position="3240"/>
    </location>
    <ligand>
        <name>Zn(2+)</name>
        <dbReference type="ChEBI" id="CHEBI:29105"/>
        <label>2</label>
    </ligand>
</feature>
<feature type="binding site" evidence="3">
    <location>
        <position position="3359"/>
    </location>
    <ligand>
        <name>Zn(2+)</name>
        <dbReference type="ChEBI" id="CHEBI:29105"/>
        <label>2</label>
    </ligand>
</feature>
<feature type="site" description="Cleavage; by viral protease NS3" evidence="1">
    <location>
        <begin position="96"/>
        <end position="97"/>
    </location>
</feature>
<feature type="site" description="Cleavage; by host signal peptidase" evidence="1">
    <location>
        <begin position="117"/>
        <end position="118"/>
    </location>
</feature>
<feature type="site" description="Cleavage; by host furin" evidence="2">
    <location>
        <begin position="205"/>
        <end position="206"/>
    </location>
</feature>
<feature type="site" description="Cleavage; by host signal peptidase" evidence="2">
    <location>
        <begin position="280"/>
        <end position="281"/>
    </location>
</feature>
<feature type="site" description="Cleavage; by host signal peptidase" evidence="1">
    <location>
        <begin position="776"/>
        <end position="777"/>
    </location>
</feature>
<feature type="site" description="Cleavage; by host" evidence="2">
    <location>
        <begin position="1128"/>
        <end position="1129"/>
    </location>
</feature>
<feature type="site" description="Cleavage; by viral protease NS3" evidence="2">
    <location>
        <begin position="1358"/>
        <end position="1359"/>
    </location>
</feature>
<feature type="site" description="Cleavage; by autolysis" evidence="1">
    <location>
        <begin position="1489"/>
        <end position="1490"/>
    </location>
</feature>
<feature type="site" description="Involved in NS3 ATPase and RTPase activities" evidence="3">
    <location>
        <position position="1949"/>
    </location>
</feature>
<feature type="site" description="Involved in NS3 ATPase and RTPase activities" evidence="3">
    <location>
        <position position="1952"/>
    </location>
</feature>
<feature type="site" description="Cleavage; by autolysis" evidence="1">
    <location>
        <begin position="2110"/>
        <end position="2111"/>
    </location>
</feature>
<feature type="site" description="Cleavage; by viral protease NS3" evidence="1">
    <location>
        <begin position="2236"/>
        <end position="2237"/>
    </location>
</feature>
<feature type="site" description="Cleavage; by host signal peptidase" evidence="1">
    <location>
        <begin position="2259"/>
        <end position="2260"/>
    </location>
</feature>
<feature type="site" description="Cleavage; by viral protease NS3" evidence="1">
    <location>
        <begin position="2511"/>
        <end position="2512"/>
    </location>
</feature>
<feature type="site" description="mRNA cap binding" evidence="16">
    <location>
        <position position="2524"/>
    </location>
</feature>
<feature type="site" description="mRNA cap binding; via carbonyl oxygen" evidence="16">
    <location>
        <position position="2527"/>
    </location>
</feature>
<feature type="site" description="mRNA cap binding" evidence="16">
    <location>
        <position position="2528"/>
    </location>
</feature>
<feature type="site" description="mRNA cap binding; via carbonyl oxygen" evidence="16">
    <location>
        <position position="2530"/>
    </location>
</feature>
<feature type="site" description="mRNA cap binding" evidence="16">
    <location>
        <position position="2535"/>
    </location>
</feature>
<feature type="site" description="mRNA cap binding" evidence="16">
    <location>
        <position position="2539"/>
    </location>
</feature>
<feature type="site" description="Essential for 2'-O-methyltransferase activity" evidence="16">
    <location>
        <position position="2572"/>
    </location>
</feature>
<feature type="site" description="Essential for 2'-O-methyltransferase and N-7 methyltransferase activity" evidence="16">
    <location>
        <position position="2657"/>
    </location>
</feature>
<feature type="site" description="mRNA cap binding" evidence="16">
    <location>
        <position position="2661"/>
    </location>
</feature>
<feature type="site" description="Essential for 2'-O-methyltransferase activity" evidence="16">
    <location>
        <position position="2694"/>
    </location>
</feature>
<feature type="site" description="mRNA cap binding" evidence="16">
    <location>
        <position position="2725"/>
    </location>
</feature>
<feature type="site" description="mRNA cap binding" evidence="16">
    <location>
        <position position="2727"/>
    </location>
</feature>
<feature type="site" description="Essential for 2'-O-methyltransferase activity" evidence="16">
    <location>
        <position position="2730"/>
    </location>
</feature>
<feature type="modified residue" description="N6-acetyllysine; by host" evidence="6">
    <location>
        <position position="1883"/>
    </location>
</feature>
<feature type="modified residue" description="Phosphoserine" evidence="1">
    <location>
        <position position="2567"/>
    </location>
</feature>
<feature type="glycosylation site" description="N-linked (GlcNAc...) asparagine; by host" evidence="10">
    <location>
        <position position="144"/>
    </location>
</feature>
<feature type="glycosylation site" description="N-linked (GlcNAc...) asparagine; by host" evidence="10 22">
    <location>
        <position position="434"/>
    </location>
</feature>
<feature type="glycosylation site" description="N-linked (GlcNAc...) asparagine; by host" evidence="10">
    <location>
        <position position="861"/>
    </location>
</feature>
<feature type="glycosylation site" description="N-linked (GlcNAc...) asparagine; by host" evidence="10">
    <location>
        <position position="983"/>
    </location>
</feature>
<feature type="glycosylation site" description="N-linked (GlcNAc...) asparagine; by host" evidence="10">
    <location>
        <position position="999"/>
    </location>
</feature>
<feature type="disulfide bond" evidence="22">
    <location>
        <begin position="283"/>
        <end position="310"/>
    </location>
</feature>
<feature type="disulfide bond" evidence="4">
    <location>
        <begin position="340"/>
        <end position="401"/>
    </location>
</feature>
<feature type="disulfide bond" evidence="22">
    <location>
        <begin position="340"/>
        <end position="396"/>
    </location>
</feature>
<feature type="disulfide bond" evidence="22">
    <location>
        <begin position="354"/>
        <end position="385"/>
    </location>
</feature>
<feature type="disulfide bond" evidence="22">
    <location>
        <begin position="372"/>
        <end position="401"/>
    </location>
</feature>
<feature type="disulfide bond" evidence="4">
    <location>
        <begin position="372"/>
        <end position="396"/>
    </location>
</feature>
<feature type="disulfide bond" evidence="22">
    <location>
        <begin position="466"/>
        <end position="570"/>
    </location>
</feature>
<feature type="disulfide bond" evidence="22">
    <location>
        <begin position="587"/>
        <end position="618"/>
    </location>
</feature>
<feature type="disulfide bond" evidence="4">
    <location>
        <begin position="780"/>
        <end position="791"/>
    </location>
</feature>
<feature type="disulfide bond" evidence="4">
    <location>
        <begin position="831"/>
        <end position="920"/>
    </location>
</feature>
<feature type="disulfide bond" evidence="4">
    <location>
        <begin position="955"/>
        <end position="1000"/>
    </location>
</feature>
<feature type="disulfide bond" evidence="4">
    <location>
        <begin position="1057"/>
        <end position="1106"/>
    </location>
</feature>
<feature type="disulfide bond" evidence="4">
    <location>
        <begin position="1068"/>
        <end position="1090"/>
    </location>
</feature>
<feature type="disulfide bond" evidence="4">
    <location>
        <begin position="1089"/>
        <end position="1093"/>
    </location>
</feature>
<feature type="mutagenesis site" description="Complete loss of envelope protein E fusion activity." evidence="18">
    <original>L</original>
    <variation>D</variation>
    <location>
        <position position="387"/>
    </location>
</feature>
<feature type="mutagenesis site" description="About 50% loss of envelope protein E fusion activity." evidence="18">
    <original>L</original>
    <variation>F</variation>
    <location>
        <position position="387"/>
    </location>
</feature>
<feature type="mutagenesis site" description="About 70% loss of envelope protein E fusion activity." evidence="18">
    <original>L</original>
    <variation>T</variation>
    <location>
        <position position="387"/>
    </location>
</feature>
<feature type="helix" evidence="36">
    <location>
        <begin position="19"/>
        <end position="23"/>
    </location>
</feature>
<feature type="turn" evidence="36">
    <location>
        <begin position="24"/>
        <end position="27"/>
    </location>
</feature>
<feature type="helix" evidence="36">
    <location>
        <begin position="35"/>
        <end position="50"/>
    </location>
</feature>
<feature type="helix" evidence="36">
    <location>
        <begin position="57"/>
        <end position="64"/>
    </location>
</feature>
<feature type="helix" evidence="36">
    <location>
        <begin position="69"/>
        <end position="90"/>
    </location>
</feature>
<feature type="strand" evidence="34">
    <location>
        <begin position="118"/>
        <end position="121"/>
    </location>
</feature>
<feature type="strand" evidence="33">
    <location>
        <begin position="123"/>
        <end position="125"/>
    </location>
</feature>
<feature type="strand" evidence="34">
    <location>
        <begin position="127"/>
        <end position="131"/>
    </location>
</feature>
<feature type="helix" evidence="34">
    <location>
        <begin position="133"/>
        <end position="135"/>
    </location>
</feature>
<feature type="strand" evidence="34">
    <location>
        <begin position="138"/>
        <end position="142"/>
    </location>
</feature>
<feature type="strand" evidence="34">
    <location>
        <begin position="145"/>
        <end position="149"/>
    </location>
</feature>
<feature type="strand" evidence="34">
    <location>
        <begin position="156"/>
        <end position="165"/>
    </location>
</feature>
<feature type="strand" evidence="34">
    <location>
        <begin position="179"/>
        <end position="184"/>
    </location>
</feature>
<feature type="strand" evidence="34">
    <location>
        <begin position="187"/>
        <end position="195"/>
    </location>
</feature>
<feature type="helix" evidence="27">
    <location>
        <begin position="282"/>
        <end position="285"/>
    </location>
</feature>
<feature type="strand" evidence="27">
    <location>
        <begin position="290"/>
        <end position="294"/>
    </location>
</feature>
<feature type="strand" evidence="27">
    <location>
        <begin position="300"/>
        <end position="306"/>
    </location>
</feature>
<feature type="strand" evidence="27">
    <location>
        <begin position="311"/>
        <end position="315"/>
    </location>
</feature>
<feature type="strand" evidence="27">
    <location>
        <begin position="318"/>
        <end position="332"/>
    </location>
</feature>
<feature type="strand" evidence="27">
    <location>
        <begin position="334"/>
        <end position="352"/>
    </location>
</feature>
<feature type="strand" evidence="35">
    <location>
        <begin position="355"/>
        <end position="357"/>
    </location>
</feature>
<feature type="helix" evidence="27">
    <location>
        <begin position="363"/>
        <end position="366"/>
    </location>
</feature>
<feature type="strand" evidence="27">
    <location>
        <begin position="370"/>
        <end position="380"/>
    </location>
</feature>
<feature type="helix" evidence="27">
    <location>
        <begin position="381"/>
        <end position="383"/>
    </location>
</feature>
<feature type="strand" evidence="27">
    <location>
        <begin position="389"/>
        <end position="401"/>
    </location>
</feature>
<feature type="strand" evidence="27">
    <location>
        <begin position="406"/>
        <end position="411"/>
    </location>
</feature>
<feature type="turn" evidence="27">
    <location>
        <begin position="414"/>
        <end position="416"/>
    </location>
</feature>
<feature type="strand" evidence="27">
    <location>
        <begin position="418"/>
        <end position="425"/>
    </location>
</feature>
<feature type="turn" evidence="33">
    <location>
        <begin position="432"/>
        <end position="435"/>
    </location>
</feature>
<feature type="strand" evidence="27">
    <location>
        <begin position="441"/>
        <end position="446"/>
    </location>
</feature>
<feature type="strand" evidence="27">
    <location>
        <begin position="451"/>
        <end position="455"/>
    </location>
</feature>
<feature type="helix" evidence="27">
    <location>
        <begin position="457"/>
        <end position="459"/>
    </location>
</feature>
<feature type="strand" evidence="27">
    <location>
        <begin position="460"/>
        <end position="467"/>
    </location>
</feature>
<feature type="helix" evidence="27">
    <location>
        <begin position="468"/>
        <end position="470"/>
    </location>
</feature>
<feature type="helix" evidence="34">
    <location>
        <begin position="474"/>
        <end position="476"/>
    </location>
</feature>
<feature type="strand" evidence="27">
    <location>
        <begin position="477"/>
        <end position="482"/>
    </location>
</feature>
<feature type="strand" evidence="27">
    <location>
        <begin position="491"/>
        <end position="496"/>
    </location>
</feature>
<feature type="helix" evidence="27">
    <location>
        <begin position="497"/>
        <end position="501"/>
    </location>
</feature>
<feature type="helix" evidence="27">
    <location>
        <begin position="518"/>
        <end position="521"/>
    </location>
</feature>
<feature type="strand" evidence="27">
    <location>
        <begin position="522"/>
        <end position="524"/>
    </location>
</feature>
<feature type="strand" evidence="28">
    <location>
        <begin position="529"/>
        <end position="533"/>
    </location>
</feature>
<feature type="strand" evidence="27">
    <location>
        <begin position="534"/>
        <end position="536"/>
    </location>
</feature>
<feature type="helix" evidence="27">
    <location>
        <begin position="541"/>
        <end position="547"/>
    </location>
</feature>
<feature type="turn" evidence="27">
    <location>
        <begin position="548"/>
        <end position="550"/>
    </location>
</feature>
<feature type="strand" evidence="27">
    <location>
        <begin position="553"/>
        <end position="557"/>
    </location>
</feature>
<feature type="strand" evidence="27">
    <location>
        <begin position="560"/>
        <end position="562"/>
    </location>
</feature>
<feature type="strand" evidence="27">
    <location>
        <begin position="567"/>
        <end position="573"/>
    </location>
</feature>
<feature type="strand" evidence="33">
    <location>
        <begin position="580"/>
        <end position="584"/>
    </location>
</feature>
<feature type="strand" evidence="31">
    <location>
        <begin position="591"/>
        <end position="600"/>
    </location>
</feature>
<feature type="strand" evidence="31">
    <location>
        <begin position="602"/>
        <end position="604"/>
    </location>
</feature>
<feature type="strand" evidence="31">
    <location>
        <begin position="606"/>
        <end position="612"/>
    </location>
</feature>
<feature type="strand" evidence="31">
    <location>
        <begin position="614"/>
        <end position="619"/>
    </location>
</feature>
<feature type="strand" evidence="31">
    <location>
        <begin position="622"/>
        <end position="626"/>
    </location>
</feature>
<feature type="strand" evidence="31">
    <location>
        <begin position="629"/>
        <end position="633"/>
    </location>
</feature>
<feature type="strand" evidence="31">
    <location>
        <begin position="636"/>
        <end position="641"/>
    </location>
</feature>
<feature type="strand" evidence="27">
    <location>
        <begin position="643"/>
        <end position="645"/>
    </location>
</feature>
<feature type="strand" evidence="33">
    <location>
        <begin position="646"/>
        <end position="649"/>
    </location>
</feature>
<feature type="strand" evidence="31">
    <location>
        <begin position="651"/>
        <end position="655"/>
    </location>
</feature>
<feature type="strand" evidence="31">
    <location>
        <begin position="658"/>
        <end position="665"/>
    </location>
</feature>
<feature type="strand" evidence="31">
    <location>
        <begin position="668"/>
        <end position="674"/>
    </location>
</feature>
<feature type="helix" evidence="30">
    <location>
        <begin position="1671"/>
        <end position="1673"/>
    </location>
</feature>
<feature type="strand" evidence="30">
    <location>
        <begin position="1674"/>
        <end position="1676"/>
    </location>
</feature>
<feature type="strand" evidence="32">
    <location>
        <begin position="1683"/>
        <end position="1686"/>
    </location>
</feature>
<feature type="turn" evidence="32">
    <location>
        <begin position="1694"/>
        <end position="1697"/>
    </location>
</feature>
<feature type="helix" evidence="32">
    <location>
        <begin position="1698"/>
        <end position="1709"/>
    </location>
</feature>
<feature type="strand" evidence="32">
    <location>
        <begin position="1713"/>
        <end position="1719"/>
    </location>
</feature>
<feature type="helix" evidence="32">
    <location>
        <begin position="1720"/>
        <end position="1729"/>
    </location>
</feature>
<feature type="turn" evidence="32">
    <location>
        <begin position="1730"/>
        <end position="1732"/>
    </location>
</feature>
<feature type="strand" evidence="32">
    <location>
        <begin position="1735"/>
        <end position="1737"/>
    </location>
</feature>
<feature type="strand" evidence="32">
    <location>
        <begin position="1751"/>
        <end position="1756"/>
    </location>
</feature>
<feature type="helix" evidence="32">
    <location>
        <begin position="1757"/>
        <end position="1764"/>
    </location>
</feature>
<feature type="strand" evidence="32">
    <location>
        <begin position="1774"/>
        <end position="1779"/>
    </location>
</feature>
<feature type="turn" evidence="32">
    <location>
        <begin position="1780"/>
        <end position="1782"/>
    </location>
</feature>
<feature type="helix" evidence="32">
    <location>
        <begin position="1786"/>
        <end position="1800"/>
    </location>
</feature>
<feature type="strand" evidence="32">
    <location>
        <begin position="1805"/>
        <end position="1809"/>
    </location>
</feature>
<feature type="strand" evidence="29">
    <location>
        <begin position="1814"/>
        <end position="1816"/>
    </location>
</feature>
<feature type="strand" evidence="32">
    <location>
        <begin position="1824"/>
        <end position="1831"/>
    </location>
</feature>
<feature type="helix" evidence="32">
    <location>
        <begin position="1844"/>
        <end position="1848"/>
    </location>
</feature>
<feature type="strand" evidence="32">
    <location>
        <begin position="1853"/>
        <end position="1856"/>
    </location>
</feature>
<feature type="helix" evidence="32">
    <location>
        <begin position="1860"/>
        <end position="1872"/>
    </location>
</feature>
<feature type="strand" evidence="32">
    <location>
        <begin position="1877"/>
        <end position="1881"/>
    </location>
</feature>
<feature type="turn" evidence="32">
    <location>
        <begin position="1882"/>
        <end position="1884"/>
    </location>
</feature>
<feature type="helix" evidence="32">
    <location>
        <begin position="1885"/>
        <end position="1888"/>
    </location>
</feature>
<feature type="helix" evidence="32">
    <location>
        <begin position="1890"/>
        <end position="1895"/>
    </location>
</feature>
<feature type="strand" evidence="32">
    <location>
        <begin position="1898"/>
        <end position="1902"/>
    </location>
</feature>
<feature type="helix" evidence="32">
    <location>
        <begin position="1904"/>
        <end position="1907"/>
    </location>
</feature>
<feature type="strand" evidence="32">
    <location>
        <begin position="1915"/>
        <end position="1919"/>
    </location>
</feature>
<feature type="strand" evidence="32">
    <location>
        <begin position="1922"/>
        <end position="1924"/>
    </location>
</feature>
<feature type="strand" evidence="32">
    <location>
        <begin position="1927"/>
        <end position="1929"/>
    </location>
</feature>
<feature type="strand" evidence="32">
    <location>
        <begin position="1932"/>
        <end position="1934"/>
    </location>
</feature>
<feature type="strand" evidence="32">
    <location>
        <begin position="1937"/>
        <end position="1940"/>
    </location>
</feature>
<feature type="helix" evidence="32">
    <location>
        <begin position="1943"/>
        <end position="1950"/>
    </location>
</feature>
<feature type="strand" evidence="32">
    <location>
        <begin position="1960"/>
        <end position="1965"/>
    </location>
</feature>
<feature type="helix" evidence="32">
    <location>
        <begin position="1977"/>
        <end position="1986"/>
    </location>
</feature>
<feature type="helix" evidence="32">
    <location>
        <begin position="2001"/>
        <end position="2006"/>
    </location>
</feature>
<feature type="turn" evidence="32">
    <location>
        <begin position="2011"/>
        <end position="2014"/>
    </location>
</feature>
<feature type="helix" evidence="32">
    <location>
        <begin position="2018"/>
        <end position="2030"/>
    </location>
</feature>
<feature type="helix" evidence="32">
    <location>
        <begin position="2035"/>
        <end position="2044"/>
    </location>
</feature>
<feature type="helix" evidence="32">
    <location>
        <begin position="2052"/>
        <end position="2054"/>
    </location>
</feature>
<feature type="helix" evidence="32">
    <location>
        <begin position="2059"/>
        <end position="2061"/>
    </location>
</feature>
<feature type="strand" evidence="30">
    <location>
        <begin position="2068"/>
        <end position="2070"/>
    </location>
</feature>
<feature type="strand" evidence="32">
    <location>
        <begin position="2072"/>
        <end position="2074"/>
    </location>
</feature>
<feature type="strand" evidence="32">
    <location>
        <begin position="2080"/>
        <end position="2082"/>
    </location>
</feature>
<feature type="helix" evidence="32">
    <location>
        <begin position="2090"/>
        <end position="2092"/>
    </location>
</feature>
<feature type="helix" evidence="32">
    <location>
        <begin position="2099"/>
        <end position="2106"/>
    </location>
</feature>
<sequence length="3414" mass="378322">MVKKAILKGKGGGPPRRVSKETATKTRQPRVQMPNGLVLMRMMGILWHAVAGTARNPVLKAFWNSVPLKQATAALRKIKRTVSALMVGLQKRGKRRSATDWMSWLLVITLLGMTLAATVRKERDGSTVIRAEGKDAATQVRVENGTCVILATDMGSWCDDSLSYECVTIDQGEEPVDVDCFCRNVDGVYLEYGRCGKQEGSRTRRSVLIPSHAQGELTGRGHKWLEGDSLRTHLTRVEGWVWKNKLLALAMVTVVWLTLESVVTRVAVLVVLLCLAPVYASRCTHLENRDFVTGTQGTTRVTLVLELGGCVTITAEGKPSMDVWLDAIYQENPAKTREYCLHAKLSDTKVAARCPTMGPATLAEEHQGGTVCKRDQSDRGWGNHCGLFGKGSIVACVKAACEAKKKATGHVYDANKIVYTVKVEPHTGDYVAANETHSGRKTASFTISSEKTILTMGEYGDVSLLCRVASGVDLAQTVILELDKTVEHLPTAWQVHRDWFNDLALPWKHEGAQNWNNAERLVEFGAPHAVKMDVYNLGDQTGVLLKALAGVPVAHIEGTKYHLKSGHVTCEVGLEKLKMKGLTYTMCDKTKFTWKRAPTDSGHDTVVMEVTFSGTKPCRIPVRAVAHGSPDVNVAMLITPNPTIENNGGGFIEMQLPPGDNIIYVGELSHQWFQKGSSIGRVFQKTKKGIERLTVIGEHAWDFGSAGGFLSSIGKAVHTVLGGAFNSIFGGVGFLPKLLLGVALAWLGLNMRNPTMSMSFLLAGGLVLAMTLGVGADVGCAVDTERMELRCGEGLVVWREVSEWYDNYAYYPETPGALASAIKETFEEGSCGVVPQNRLEMAMWRSSVTELNLALAEGEANLTVVVDKFDPTDYRGGVPGLLKKGKDIKVSWKSWGHSMIWSIPEAPRRFMVGTEGQSECPLERRKTGVFTVAEFGVGLRTKVFLDFRQEPTHECDTGVMGAAVKNGMAIHTDQSLWMRSMKNDTGTYIVELLVTDLRNCSWPASHTIDNADVVDSELFLPASLAGPRSWYNRIPGYSEQVKGPWKYTPIRVIREECPGTTVTINAKCDKRGASVRSTTESGKVIPEWCCRACTMPPVTFRTGTDCWYAMEIRPVHDQGGLVRSMVVADNGELLSEGGVPGIVALFVVLEYIIRRRPSTGTTVVWGGIVVLALLVTGMVRIESLVRYVVAVGITFHLELGPEIVALMLLQAVFELRVGLLSAFALRRSLTVREMVTTYFLLLVLELGLPGASLEEFWKWGDALAMGALIFRACTAEGKTGAGLLLMALMTQQDVVTVHHGLVCFLSVASACSVWRLLKGHREQKGLTWVVPLAGLLGGEGSGIRLLAFWELSAHRGRRSFSEPLTVVGVMLTLASGMMRHTSQEALCALAVASFLLLMLVLGTRKMQLVAEWSGCVEWYPELVNEGGEVSLRVRQDAMGNFHLTELEKEERMMAFWLIAGLAASAIHWSGILGVMGLWTLTEMLRSSRRSDLVFSGQGGRERGDRPFEVKDGVYRIFSPGLFWGQNQVGVGYGSKGVLHTMWHVTRGAALSIDDAVAGPYWADVREDVVCYGGAWSLEEKWKGETVQVHAFPPGRAHEVHQCQPGELILDTGRKLGAIPIDLVKGTSGSPILNAQGVVVGLYGNGLKTNETYVSSIAQGEAEKSRPNLPQAVVGTGWTSKGQITVLDMHPGSGKTHRVLPELIRQCIDRRLRTLVLAPTRVVLKEMERALNGKRVRFHSPAVSDQQAGGAIVDVMCHATYVNRRLLPQGRQNWEVAIMDEAHWTDPHSIAARGHLYTLAKENKCALVLMTATPPGKSEPFPESNGAITSEERQIPDGEWRDGFDWITEYEGRTAWFVPSIAKGGAIARTLRQKGKSVICLNSKTFEKDYSRVRDEKPDFVVTTDISEMGANLDVSRVIDGRTNIKPEEVDGKVELTGTRRVTTASAAQRRGRVGRQDGRTDEYIYSGQCDDDDSGLVQWKEAQILLDNITTLRGPVATFYGPEQDKMPEVAGHFRLTEEKRKHFRHLLTHCDFTPWLAWHVAANVSSVTDRSWTWEGPEANAVDEASGDLVTFRSPNGAERTLRPVWKDARMFKEGRDIKEFVAYASGRRSFGDVLTGMSGVPELLRHRCVSALDVFYTLMHEEPGSRAMRMAERDAPEAFLTMVEMMVLGLATLGVIWCFVVRTSISRMMLGTLVLLASLLLLWAGGVGYGNMAGVALIFYTLLTVLQPEAGKQRSSDDNKLAYFLLTLCSLAGLVAANEMGFLEKTKADLSTALWSEREEPRPWSEWTNVDIQPARSWGTYVLVVSLFTPYIIHQLQTKIQQLVNSAVASGAQAMRDLGGGAPFFGVAGHVMTLGVVSLIGATPTSLMVGVGLAALHLAIVVSGLEAELTQRAHKVFFSAMVRNPMVDGDVINPFGEGEAKPALYERKMSLVLATVLCLMSVVMNRTVASITEASAVGLAAAGQLLRPEADTLWTMPVACGMSGVVRGSLWGFLPLGHRLWLRASGGRRGGSEGDTLGDLWKRRLNNCTREEFFVYRRTGILETERDKARELLRRGETNVGLAVSRGTAKLAWLEERGYATLKGEVVDLGCGRGGWSYYAASRPAVMSVRAYTIGGKGHEAPKMVTSLGWNLIKFRSGMDVFSMQPHRADTVMCDIGESSPDAAVEGERTRKVILLMEQWKNRNPTAACVFKVLAPYRPEVIEALHRFQLQWGGGLVRTPFSRNSTHEMYYSTAVTGNIVNSVNVQSRKLLARFGDQRGPTKVPELDLGVGTRCVVLAEDKVKEQDVQERIRALREQYSETWHMDEEHPYRTWQYWGSYRTAPTGSAASLINGVVKLLSWPWNAREDVVRMAMTDTTAFGQQRVFKDKVDTKAQEPQPGTRVIMRAVNDWILERLAQKSKPRMCSREEFIAKVKSNAALGAWSDEQNRWASAREAVEDPAFWRLVDEERERHLMGRCAHCVYNMMGKREKKLGEFGVAKGSRAIWYMWLGSRFLEFEALGFLNEDHWASRESSGAGVEGISLNYLGWHLKKLSTLNGGLFYADDTAGWDTKVTNADLEDEEQILRYMEGEHKQLATTIMQKAYHAKVVKVARPSRDGGCIMDVITRRDQRGSGQVVTYALNTLTNIKVQLIRMMEGEGVIEAADAHNPRLLRVERWLKEHGEERLGRMLVSGDDCVVRPLDDRFGKALYFLNDMAKTRKDIGEWEHSAGFSSWEEVPFCSHHFHELVMKDGRTLVVPCRDQDELVGRARISPGCGWSVRETACLSKAYGQMWLLSYFHRRDLRTLGLAINSAVPADWVPTGRTTWSIHASGAWMTTEDMLDVWNRVWILDNPFMQNKERVMEWRDVPYLPKAQDMLCSSLVGRRERAEWAKNIWGAVEKVRKMIGPEKFKDYLSCMDRHDLHWELRLESSII</sequence>
<evidence type="ECO:0000250" key="1">
    <source>
        <dbReference type="UniProtKB" id="P03314"/>
    </source>
</evidence>
<evidence type="ECO:0000250" key="2">
    <source>
        <dbReference type="UniProtKB" id="P06935"/>
    </source>
</evidence>
<evidence type="ECO:0000250" key="3">
    <source>
        <dbReference type="UniProtKB" id="P14335"/>
    </source>
</evidence>
<evidence type="ECO:0000250" key="4">
    <source>
        <dbReference type="UniProtKB" id="P17763"/>
    </source>
</evidence>
<evidence type="ECO:0000250" key="5">
    <source>
        <dbReference type="UniProtKB" id="Q01299"/>
    </source>
</evidence>
<evidence type="ECO:0000250" key="6">
    <source>
        <dbReference type="UniProtKB" id="Q32ZE1"/>
    </source>
</evidence>
<evidence type="ECO:0000250" key="7">
    <source>
        <dbReference type="UniProtKB" id="Q6YMS4"/>
    </source>
</evidence>
<evidence type="ECO:0000250" key="8">
    <source>
        <dbReference type="UniProtKB" id="Q9Q6P4"/>
    </source>
</evidence>
<evidence type="ECO:0000255" key="9"/>
<evidence type="ECO:0000255" key="10">
    <source>
        <dbReference type="PROSITE-ProRule" id="PRU00498"/>
    </source>
</evidence>
<evidence type="ECO:0000255" key="11">
    <source>
        <dbReference type="PROSITE-ProRule" id="PRU00539"/>
    </source>
</evidence>
<evidence type="ECO:0000255" key="12">
    <source>
        <dbReference type="PROSITE-ProRule" id="PRU00541"/>
    </source>
</evidence>
<evidence type="ECO:0000255" key="13">
    <source>
        <dbReference type="PROSITE-ProRule" id="PRU00542"/>
    </source>
</evidence>
<evidence type="ECO:0000255" key="14">
    <source>
        <dbReference type="PROSITE-ProRule" id="PRU00859"/>
    </source>
</evidence>
<evidence type="ECO:0000255" key="15">
    <source>
        <dbReference type="PROSITE-ProRule" id="PRU00860"/>
    </source>
</evidence>
<evidence type="ECO:0000255" key="16">
    <source>
        <dbReference type="PROSITE-ProRule" id="PRU00924"/>
    </source>
</evidence>
<evidence type="ECO:0000256" key="17">
    <source>
        <dbReference type="SAM" id="MobiDB-lite"/>
    </source>
</evidence>
<evidence type="ECO:0000269" key="18">
    <source>
    </source>
</evidence>
<evidence type="ECO:0000269" key="19">
    <source>
    </source>
</evidence>
<evidence type="ECO:0000269" key="20">
    <source>
    </source>
</evidence>
<evidence type="ECO:0000269" key="21">
    <source>
    </source>
</evidence>
<evidence type="ECO:0000269" key="22">
    <source>
    </source>
</evidence>
<evidence type="ECO:0000305" key="23"/>
<evidence type="ECO:0007744" key="24">
    <source>
        <dbReference type="PDB" id="1N6G"/>
    </source>
</evidence>
<evidence type="ECO:0007744" key="25">
    <source>
        <dbReference type="PDB" id="1NA4"/>
    </source>
</evidence>
<evidence type="ECO:0007744" key="26">
    <source>
        <dbReference type="PDB" id="1SVB"/>
    </source>
</evidence>
<evidence type="ECO:0007829" key="27">
    <source>
        <dbReference type="PDB" id="1SVB"/>
    </source>
</evidence>
<evidence type="ECO:0007829" key="28">
    <source>
        <dbReference type="PDB" id="6S8C"/>
    </source>
</evidence>
<evidence type="ECO:0007829" key="29">
    <source>
        <dbReference type="PDB" id="7BLV"/>
    </source>
</evidence>
<evidence type="ECO:0007829" key="30">
    <source>
        <dbReference type="PDB" id="7BM0"/>
    </source>
</evidence>
<evidence type="ECO:0007829" key="31">
    <source>
        <dbReference type="PDB" id="7LSG"/>
    </source>
</evidence>
<evidence type="ECO:0007829" key="32">
    <source>
        <dbReference type="PDB" id="7OJ4"/>
    </source>
</evidence>
<evidence type="ECO:0007829" key="33">
    <source>
        <dbReference type="PDB" id="7QRE"/>
    </source>
</evidence>
<evidence type="ECO:0007829" key="34">
    <source>
        <dbReference type="PDB" id="7QRF"/>
    </source>
</evidence>
<evidence type="ECO:0007829" key="35">
    <source>
        <dbReference type="PDB" id="7QRG"/>
    </source>
</evidence>
<evidence type="ECO:0007829" key="36">
    <source>
        <dbReference type="PDB" id="7YWQ"/>
    </source>
</evidence>
<reference key="1">
    <citation type="journal article" date="1995" name="Virology">
        <title>The flavivirus 3'-noncoding region: extensive size heterogeneity independent of evolutionary relationships among strains of tick-borne encephalitis virus.</title>
        <authorList>
            <person name="Wallner G."/>
            <person name="Mandl C.W."/>
            <person name="Kunz C."/>
            <person name="Heinz F.X."/>
        </authorList>
    </citation>
    <scope>NUCLEOTIDE SEQUENCE [GENOMIC RNA]</scope>
    <scope>SEQUENCE REVISION</scope>
    <source>
        <strain>Neudoerfl</strain>
    </source>
</reference>
<reference key="2">
    <citation type="journal article" date="1988" name="Virology">
        <title>Sequence of the structural proteins of tick-borne encephalitis virus (western subtype) and comparative analysis with other flaviviruses.</title>
        <authorList>
            <person name="Mandl C.W."/>
            <person name="Heinz F.X."/>
            <person name="Kunz C."/>
        </authorList>
    </citation>
    <scope>NUCLEOTIDE SEQUENCE [GENOMIC RNA] OF 1-779</scope>
    <source>
        <strain>Neudoerfl</strain>
    </source>
</reference>
<reference key="3">
    <citation type="journal article" date="1989" name="Virology">
        <title>Genome sequence of tick-borne encephalitis virus (Western subtype) and comparative analysis of nonstructural proteins with other flaviviruses.</title>
        <authorList>
            <person name="Mandl C.W."/>
            <person name="Heinz F.X."/>
            <person name="Stoeckl E."/>
            <person name="Kunz C."/>
        </authorList>
    </citation>
    <scope>NUCLEOTIDE SEQUENCE [GENOMIC RNA] OF 767-3414</scope>
    <source>
        <strain>Neudoerfl</strain>
    </source>
</reference>
<reference key="4">
    <citation type="journal article" date="1983" name="Virology">
        <title>Amino acid compositions and amino-terminal sequences of the structural proteins of a flavivirus, European Tick-Borne Encephalitis virus.</title>
        <authorList>
            <person name="Boege U."/>
            <person name="Heinz F.X."/>
            <person name="Wengler G."/>
            <person name="Kunz C."/>
        </authorList>
    </citation>
    <scope>PROTEIN SEQUENCE OF 2-18 AND 206-209</scope>
</reference>
<reference key="5">
    <citation type="journal article" date="1987" name="Virology">
        <title>Studies on the glycosylation of flavivirus E proteins and the role of carbohydrate in antigenic structure.</title>
        <authorList>
            <person name="Winkler G."/>
            <person name="Heinz F.X."/>
            <person name="Kunz C."/>
        </authorList>
    </citation>
    <scope>GLYCOSYLATION (ENVELOPE PROTEIN E)</scope>
</reference>
<reference key="6">
    <citation type="journal article" date="2001" name="J. Virol.">
        <title>Mutational evidence for an internal fusion peptide in flavivirus envelope protein E.</title>
        <authorList>
            <person name="Allison S.L."/>
            <person name="Schalich J."/>
            <person name="Stiasny K."/>
            <person name="Mandl C.W."/>
            <person name="Heinz F.X."/>
        </authorList>
    </citation>
    <scope>FUSION REGION</scope>
    <scope>MUTAGENESIS OF LEU-387</scope>
</reference>
<reference key="7">
    <citation type="journal article" date="2004" name="J. Virol.">
        <title>Isolation of capsid protein dimers from the tick-borne encephalitis flavivirus and in vitro assembly of capsid-like particles.</title>
        <authorList>
            <person name="Kiermayr S."/>
            <person name="Kofler R.M."/>
            <person name="Mandl C.W."/>
            <person name="Messner P."/>
            <person name="Heinz F.X."/>
        </authorList>
    </citation>
    <scope>SUBUNIT (CAPSID PROTEIN C)</scope>
</reference>
<reference key="8">
    <citation type="journal article" date="2007" name="PLoS Pathog.">
        <title>Characterization of a structural intermediate of flavivirus membrane fusion.</title>
        <authorList>
            <person name="Stiasny K."/>
            <person name="Kossl C."/>
            <person name="Lepault J."/>
            <person name="Rey F.A."/>
            <person name="Heinz F.X."/>
        </authorList>
    </citation>
    <scope>TOPOLOGY (ENVELOPE PROTEIN E)</scope>
</reference>
<reference evidence="26" key="9">
    <citation type="journal article" date="1995" name="Nature">
        <title>The envelope glycoprotein from tick-borne encephalitis virus at 2 A resolution.</title>
        <authorList>
            <person name="Rey F.A."/>
            <person name="Heinz F.X."/>
            <person name="Mandl C."/>
            <person name="Kunz C."/>
            <person name="Harrison S.C."/>
        </authorList>
    </citation>
    <scope>X-RAY CRYSTALLOGRAPHY (1.90 ANGSTROMS) OF 281-675</scope>
    <scope>GLYCOSYLATION AT ASN-434</scope>
</reference>
<reference evidence="24 25" key="10">
    <citation type="journal article" date="2003" name="EMBO J.">
        <title>Structures of immature flavivirus particles.</title>
        <authorList>
            <person name="Zhang Y."/>
            <person name="Corver J."/>
            <person name="Chipman P.R."/>
            <person name="Zhang W."/>
            <person name="Pletnev S.V."/>
            <person name="Sedlak D."/>
            <person name="Baker T.S."/>
            <person name="Strauss J.H."/>
            <person name="Kuhn R.J."/>
            <person name="Rossmann M.G."/>
        </authorList>
    </citation>
    <scope>STRUCTURE BY ELECTRON MICROSCOPY (16.00 ANGSTROMS) OF 281-675</scope>
</reference>